<sequence>MAVNVYSTSVTSDNLSRHDMLAWINESLQLNLTKIEQLCSGAAYCQFMDMLFPGSIALKKVKFQAKLEHEYIQNFKILQAGFKRMGVDKIIPVDKLVKGKFQDNFEFVQWFKKFFDANYDGKDYDPVAARQGQETAVAPSLVAPALNKPKKPLTSSSAAPQRPISTQRTAAAPKAGPGVVRKNPGVGNGDDEAAELMQQVNVLKLTVEDLEKERDFYFGKLRNIELICQENEGENDPVLQRIVDILYATDEGFVIPDEGGPQEEQEEY</sequence>
<evidence type="ECO:0000250" key="1">
    <source>
        <dbReference type="UniProtKB" id="Q61166"/>
    </source>
</evidence>
<evidence type="ECO:0000255" key="2">
    <source>
        <dbReference type="PROSITE-ProRule" id="PRU00044"/>
    </source>
</evidence>
<evidence type="ECO:0000255" key="3">
    <source>
        <dbReference type="PROSITE-ProRule" id="PRU00576"/>
    </source>
</evidence>
<evidence type="ECO:0000256" key="4">
    <source>
        <dbReference type="SAM" id="MobiDB-lite"/>
    </source>
</evidence>
<evidence type="ECO:0000269" key="5">
    <source>
    </source>
</evidence>
<evidence type="ECO:0000269" key="6">
    <source>
    </source>
</evidence>
<evidence type="ECO:0000269" key="7">
    <source>
    </source>
</evidence>
<evidence type="ECO:0000269" key="8">
    <source>
    </source>
</evidence>
<evidence type="ECO:0000269" key="9">
    <source>
    </source>
</evidence>
<evidence type="ECO:0000269" key="10">
    <source>
    </source>
</evidence>
<evidence type="ECO:0000269" key="11">
    <source>
    </source>
</evidence>
<evidence type="ECO:0000269" key="12">
    <source>
    </source>
</evidence>
<evidence type="ECO:0000269" key="13">
    <source>
    </source>
</evidence>
<evidence type="ECO:0000269" key="14">
    <source>
    </source>
</evidence>
<evidence type="ECO:0000269" key="15">
    <source>
    </source>
</evidence>
<evidence type="ECO:0000269" key="16">
    <source>
    </source>
</evidence>
<evidence type="ECO:0000269" key="17">
    <source>
    </source>
</evidence>
<evidence type="ECO:0000269" key="18">
    <source>
    </source>
</evidence>
<evidence type="ECO:0000269" key="19">
    <source>
    </source>
</evidence>
<evidence type="ECO:0000269" key="20">
    <source>
    </source>
</evidence>
<evidence type="ECO:0000269" key="21">
    <source>
    </source>
</evidence>
<evidence type="ECO:0000269" key="22">
    <source>
    </source>
</evidence>
<evidence type="ECO:0000269" key="23">
    <source>
    </source>
</evidence>
<evidence type="ECO:0000269" key="24">
    <source>
    </source>
</evidence>
<evidence type="ECO:0000269" key="25">
    <source>
    </source>
</evidence>
<evidence type="ECO:0000269" key="26">
    <source>
    </source>
</evidence>
<evidence type="ECO:0000269" key="27">
    <source>
    </source>
</evidence>
<evidence type="ECO:0000269" key="28">
    <source>
    </source>
</evidence>
<evidence type="ECO:0000269" key="29">
    <source>
    </source>
</evidence>
<evidence type="ECO:0000269" key="30">
    <source>
    </source>
</evidence>
<evidence type="ECO:0000269" key="31">
    <source>
    </source>
</evidence>
<evidence type="ECO:0000269" key="32">
    <source>
    </source>
</evidence>
<evidence type="ECO:0000269" key="33">
    <source>
    </source>
</evidence>
<evidence type="ECO:0000269" key="34">
    <source>
    </source>
</evidence>
<evidence type="ECO:0000269" key="35">
    <source>
    </source>
</evidence>
<evidence type="ECO:0000269" key="36">
    <source>
    </source>
</evidence>
<evidence type="ECO:0000269" key="37">
    <source>
    </source>
</evidence>
<evidence type="ECO:0000269" key="38">
    <source>
    </source>
</evidence>
<evidence type="ECO:0000269" key="39">
    <source>
    </source>
</evidence>
<evidence type="ECO:0000269" key="40">
    <source>
    </source>
</evidence>
<evidence type="ECO:0000269" key="41">
    <source ref="6"/>
</evidence>
<evidence type="ECO:0000303" key="42">
    <source>
    </source>
</evidence>
<evidence type="ECO:0000305" key="43"/>
<evidence type="ECO:0000305" key="44">
    <source>
    </source>
</evidence>
<evidence type="ECO:0000312" key="45">
    <source>
        <dbReference type="HGNC" id="HGNC:6890"/>
    </source>
</evidence>
<evidence type="ECO:0007744" key="46">
    <source>
    </source>
</evidence>
<evidence type="ECO:0007744" key="47">
    <source>
    </source>
</evidence>
<evidence type="ECO:0007744" key="48">
    <source>
    </source>
</evidence>
<evidence type="ECO:0007744" key="49">
    <source>
    </source>
</evidence>
<evidence type="ECO:0007744" key="50">
    <source>
    </source>
</evidence>
<evidence type="ECO:0007829" key="51">
    <source>
        <dbReference type="PDB" id="1WU9"/>
    </source>
</evidence>
<evidence type="ECO:0007829" key="52">
    <source>
        <dbReference type="PDB" id="2QJZ"/>
    </source>
</evidence>
<evidence type="ECO:0007829" key="53">
    <source>
        <dbReference type="PDB" id="2R8U"/>
    </source>
</evidence>
<keyword id="KW-0002">3D-structure</keyword>
<keyword id="KW-0007">Acetylation</keyword>
<keyword id="KW-0131">Cell cycle</keyword>
<keyword id="KW-0132">Cell division</keyword>
<keyword id="KW-0963">Cytoplasm</keyword>
<keyword id="KW-0206">Cytoskeleton</keyword>
<keyword id="KW-0903">Direct protein sequencing</keyword>
<keyword id="KW-0333">Golgi apparatus</keyword>
<keyword id="KW-0493">Microtubule</keyword>
<keyword id="KW-0498">Mitosis</keyword>
<keyword id="KW-0597">Phosphoprotein</keyword>
<keyword id="KW-1267">Proteomics identification</keyword>
<keyword id="KW-1185">Reference proteome</keyword>
<name>MARE1_HUMAN</name>
<accession>Q15691</accession>
<accession>B2R6I7</accession>
<accession>E1P5M8</accession>
<accession>Q3KQS8</accession>
<protein>
    <recommendedName>
        <fullName>Microtubule-associated protein RP/EB family member 1</fullName>
    </recommendedName>
    <alternativeName>
        <fullName>APC-binding protein EB1</fullName>
    </alternativeName>
    <alternativeName>
        <fullName evidence="42">End-binding protein 1</fullName>
        <shortName evidence="42">EB1</shortName>
    </alternativeName>
</protein>
<reference key="1">
    <citation type="journal article" date="1995" name="Cancer Res.">
        <title>APC binds to the novel protein EB1.</title>
        <authorList>
            <person name="Su L.-K."/>
            <person name="Burrell M."/>
            <person name="Hill D.E."/>
            <person name="Gyuris J."/>
            <person name="Brent R."/>
            <person name="Wiltshire R."/>
            <person name="Trent J."/>
            <person name="Vogelstein B."/>
            <person name="Kinzler K.W."/>
        </authorList>
    </citation>
    <scope>NUCLEOTIDE SEQUENCE [MRNA]</scope>
    <scope>INTERACTION WITH APC</scope>
</reference>
<reference key="2">
    <citation type="journal article" date="2004" name="Nat. Genet.">
        <title>Complete sequencing and characterization of 21,243 full-length human cDNAs.</title>
        <authorList>
            <person name="Ota T."/>
            <person name="Suzuki Y."/>
            <person name="Nishikawa T."/>
            <person name="Otsuki T."/>
            <person name="Sugiyama T."/>
            <person name="Irie R."/>
            <person name="Wakamatsu A."/>
            <person name="Hayashi K."/>
            <person name="Sato H."/>
            <person name="Nagai K."/>
            <person name="Kimura K."/>
            <person name="Makita H."/>
            <person name="Sekine M."/>
            <person name="Obayashi M."/>
            <person name="Nishi T."/>
            <person name="Shibahara T."/>
            <person name="Tanaka T."/>
            <person name="Ishii S."/>
            <person name="Yamamoto J."/>
            <person name="Saito K."/>
            <person name="Kawai Y."/>
            <person name="Isono Y."/>
            <person name="Nakamura Y."/>
            <person name="Nagahari K."/>
            <person name="Murakami K."/>
            <person name="Yasuda T."/>
            <person name="Iwayanagi T."/>
            <person name="Wagatsuma M."/>
            <person name="Shiratori A."/>
            <person name="Sudo H."/>
            <person name="Hosoiri T."/>
            <person name="Kaku Y."/>
            <person name="Kodaira H."/>
            <person name="Kondo H."/>
            <person name="Sugawara M."/>
            <person name="Takahashi M."/>
            <person name="Kanda K."/>
            <person name="Yokoi T."/>
            <person name="Furuya T."/>
            <person name="Kikkawa E."/>
            <person name="Omura Y."/>
            <person name="Abe K."/>
            <person name="Kamihara K."/>
            <person name="Katsuta N."/>
            <person name="Sato K."/>
            <person name="Tanikawa M."/>
            <person name="Yamazaki M."/>
            <person name="Ninomiya K."/>
            <person name="Ishibashi T."/>
            <person name="Yamashita H."/>
            <person name="Murakawa K."/>
            <person name="Fujimori K."/>
            <person name="Tanai H."/>
            <person name="Kimata M."/>
            <person name="Watanabe M."/>
            <person name="Hiraoka S."/>
            <person name="Chiba Y."/>
            <person name="Ishida S."/>
            <person name="Ono Y."/>
            <person name="Takiguchi S."/>
            <person name="Watanabe S."/>
            <person name="Yosida M."/>
            <person name="Hotuta T."/>
            <person name="Kusano J."/>
            <person name="Kanehori K."/>
            <person name="Takahashi-Fujii A."/>
            <person name="Hara H."/>
            <person name="Tanase T.-O."/>
            <person name="Nomura Y."/>
            <person name="Togiya S."/>
            <person name="Komai F."/>
            <person name="Hara R."/>
            <person name="Takeuchi K."/>
            <person name="Arita M."/>
            <person name="Imose N."/>
            <person name="Musashino K."/>
            <person name="Yuuki H."/>
            <person name="Oshima A."/>
            <person name="Sasaki N."/>
            <person name="Aotsuka S."/>
            <person name="Yoshikawa Y."/>
            <person name="Matsunawa H."/>
            <person name="Ichihara T."/>
            <person name="Shiohata N."/>
            <person name="Sano S."/>
            <person name="Moriya S."/>
            <person name="Momiyama H."/>
            <person name="Satoh N."/>
            <person name="Takami S."/>
            <person name="Terashima Y."/>
            <person name="Suzuki O."/>
            <person name="Nakagawa S."/>
            <person name="Senoh A."/>
            <person name="Mizoguchi H."/>
            <person name="Goto Y."/>
            <person name="Shimizu F."/>
            <person name="Wakebe H."/>
            <person name="Hishigaki H."/>
            <person name="Watanabe T."/>
            <person name="Sugiyama A."/>
            <person name="Takemoto M."/>
            <person name="Kawakami B."/>
            <person name="Yamazaki M."/>
            <person name="Watanabe K."/>
            <person name="Kumagai A."/>
            <person name="Itakura S."/>
            <person name="Fukuzumi Y."/>
            <person name="Fujimori Y."/>
            <person name="Komiyama M."/>
            <person name="Tashiro H."/>
            <person name="Tanigami A."/>
            <person name="Fujiwara T."/>
            <person name="Ono T."/>
            <person name="Yamada K."/>
            <person name="Fujii Y."/>
            <person name="Ozaki K."/>
            <person name="Hirao M."/>
            <person name="Ohmori Y."/>
            <person name="Kawabata A."/>
            <person name="Hikiji T."/>
            <person name="Kobatake N."/>
            <person name="Inagaki H."/>
            <person name="Ikema Y."/>
            <person name="Okamoto S."/>
            <person name="Okitani R."/>
            <person name="Kawakami T."/>
            <person name="Noguchi S."/>
            <person name="Itoh T."/>
            <person name="Shigeta K."/>
            <person name="Senba T."/>
            <person name="Matsumura K."/>
            <person name="Nakajima Y."/>
            <person name="Mizuno T."/>
            <person name="Morinaga M."/>
            <person name="Sasaki M."/>
            <person name="Togashi T."/>
            <person name="Oyama M."/>
            <person name="Hata H."/>
            <person name="Watanabe M."/>
            <person name="Komatsu T."/>
            <person name="Mizushima-Sugano J."/>
            <person name="Satoh T."/>
            <person name="Shirai Y."/>
            <person name="Takahashi Y."/>
            <person name="Nakagawa K."/>
            <person name="Okumura K."/>
            <person name="Nagase T."/>
            <person name="Nomura N."/>
            <person name="Kikuchi H."/>
            <person name="Masuho Y."/>
            <person name="Yamashita R."/>
            <person name="Nakai K."/>
            <person name="Yada T."/>
            <person name="Nakamura Y."/>
            <person name="Ohara O."/>
            <person name="Isogai T."/>
            <person name="Sugano S."/>
        </authorList>
    </citation>
    <scope>NUCLEOTIDE SEQUENCE [LARGE SCALE MRNA]</scope>
    <source>
        <tissue>Brain</tissue>
    </source>
</reference>
<reference key="3">
    <citation type="journal article" date="2001" name="Nature">
        <title>The DNA sequence and comparative analysis of human chromosome 20.</title>
        <authorList>
            <person name="Deloukas P."/>
            <person name="Matthews L.H."/>
            <person name="Ashurst J.L."/>
            <person name="Burton J."/>
            <person name="Gilbert J.G.R."/>
            <person name="Jones M."/>
            <person name="Stavrides G."/>
            <person name="Almeida J.P."/>
            <person name="Babbage A.K."/>
            <person name="Bagguley C.L."/>
            <person name="Bailey J."/>
            <person name="Barlow K.F."/>
            <person name="Bates K.N."/>
            <person name="Beard L.M."/>
            <person name="Beare D.M."/>
            <person name="Beasley O.P."/>
            <person name="Bird C.P."/>
            <person name="Blakey S.E."/>
            <person name="Bridgeman A.M."/>
            <person name="Brown A.J."/>
            <person name="Buck D."/>
            <person name="Burrill W.D."/>
            <person name="Butler A.P."/>
            <person name="Carder C."/>
            <person name="Carter N.P."/>
            <person name="Chapman J.C."/>
            <person name="Clamp M."/>
            <person name="Clark G."/>
            <person name="Clark L.N."/>
            <person name="Clark S.Y."/>
            <person name="Clee C.M."/>
            <person name="Clegg S."/>
            <person name="Cobley V.E."/>
            <person name="Collier R.E."/>
            <person name="Connor R.E."/>
            <person name="Corby N.R."/>
            <person name="Coulson A."/>
            <person name="Coville G.J."/>
            <person name="Deadman R."/>
            <person name="Dhami P.D."/>
            <person name="Dunn M."/>
            <person name="Ellington A.G."/>
            <person name="Frankland J.A."/>
            <person name="Fraser A."/>
            <person name="French L."/>
            <person name="Garner P."/>
            <person name="Grafham D.V."/>
            <person name="Griffiths C."/>
            <person name="Griffiths M.N.D."/>
            <person name="Gwilliam R."/>
            <person name="Hall R.E."/>
            <person name="Hammond S."/>
            <person name="Harley J.L."/>
            <person name="Heath P.D."/>
            <person name="Ho S."/>
            <person name="Holden J.L."/>
            <person name="Howden P.J."/>
            <person name="Huckle E."/>
            <person name="Hunt A.R."/>
            <person name="Hunt S.E."/>
            <person name="Jekosch K."/>
            <person name="Johnson C.M."/>
            <person name="Johnson D."/>
            <person name="Kay M.P."/>
            <person name="Kimberley A.M."/>
            <person name="King A."/>
            <person name="Knights A."/>
            <person name="Laird G.K."/>
            <person name="Lawlor S."/>
            <person name="Lehvaeslaiho M.H."/>
            <person name="Leversha M.A."/>
            <person name="Lloyd C."/>
            <person name="Lloyd D.M."/>
            <person name="Lovell J.D."/>
            <person name="Marsh V.L."/>
            <person name="Martin S.L."/>
            <person name="McConnachie L.J."/>
            <person name="McLay K."/>
            <person name="McMurray A.A."/>
            <person name="Milne S.A."/>
            <person name="Mistry D."/>
            <person name="Moore M.J.F."/>
            <person name="Mullikin J.C."/>
            <person name="Nickerson T."/>
            <person name="Oliver K."/>
            <person name="Parker A."/>
            <person name="Patel R."/>
            <person name="Pearce T.A.V."/>
            <person name="Peck A.I."/>
            <person name="Phillimore B.J.C.T."/>
            <person name="Prathalingam S.R."/>
            <person name="Plumb R.W."/>
            <person name="Ramsay H."/>
            <person name="Rice C.M."/>
            <person name="Ross M.T."/>
            <person name="Scott C.E."/>
            <person name="Sehra H.K."/>
            <person name="Shownkeen R."/>
            <person name="Sims S."/>
            <person name="Skuce C.D."/>
            <person name="Smith M.L."/>
            <person name="Soderlund C."/>
            <person name="Steward C.A."/>
            <person name="Sulston J.E."/>
            <person name="Swann R.M."/>
            <person name="Sycamore N."/>
            <person name="Taylor R."/>
            <person name="Tee L."/>
            <person name="Thomas D.W."/>
            <person name="Thorpe A."/>
            <person name="Tracey A."/>
            <person name="Tromans A.C."/>
            <person name="Vaudin M."/>
            <person name="Wall M."/>
            <person name="Wallis J.M."/>
            <person name="Whitehead S.L."/>
            <person name="Whittaker P."/>
            <person name="Willey D.L."/>
            <person name="Williams L."/>
            <person name="Williams S.A."/>
            <person name="Wilming L."/>
            <person name="Wray P.W."/>
            <person name="Hubbard T."/>
            <person name="Durbin R.M."/>
            <person name="Bentley D.R."/>
            <person name="Beck S."/>
            <person name="Rogers J."/>
        </authorList>
    </citation>
    <scope>NUCLEOTIDE SEQUENCE [LARGE SCALE GENOMIC DNA]</scope>
</reference>
<reference key="4">
    <citation type="submission" date="2005-09" db="EMBL/GenBank/DDBJ databases">
        <authorList>
            <person name="Mural R.J."/>
            <person name="Istrail S."/>
            <person name="Sutton G.G."/>
            <person name="Florea L."/>
            <person name="Halpern A.L."/>
            <person name="Mobarry C.M."/>
            <person name="Lippert R."/>
            <person name="Walenz B."/>
            <person name="Shatkay H."/>
            <person name="Dew I."/>
            <person name="Miller J.R."/>
            <person name="Flanigan M.J."/>
            <person name="Edwards N.J."/>
            <person name="Bolanos R."/>
            <person name="Fasulo D."/>
            <person name="Halldorsson B.V."/>
            <person name="Hannenhalli S."/>
            <person name="Turner R."/>
            <person name="Yooseph S."/>
            <person name="Lu F."/>
            <person name="Nusskern D.R."/>
            <person name="Shue B.C."/>
            <person name="Zheng X.H."/>
            <person name="Zhong F."/>
            <person name="Delcher A.L."/>
            <person name="Huson D.H."/>
            <person name="Kravitz S.A."/>
            <person name="Mouchard L."/>
            <person name="Reinert K."/>
            <person name="Remington K.A."/>
            <person name="Clark A.G."/>
            <person name="Waterman M.S."/>
            <person name="Eichler E.E."/>
            <person name="Adams M.D."/>
            <person name="Hunkapiller M.W."/>
            <person name="Myers E.W."/>
            <person name="Venter J.C."/>
        </authorList>
    </citation>
    <scope>NUCLEOTIDE SEQUENCE [LARGE SCALE GENOMIC DNA]</scope>
</reference>
<reference key="5">
    <citation type="journal article" date="2004" name="Genome Res.">
        <title>The status, quality, and expansion of the NIH full-length cDNA project: the Mammalian Gene Collection (MGC).</title>
        <authorList>
            <consortium name="The MGC Project Team"/>
        </authorList>
    </citation>
    <scope>NUCLEOTIDE SEQUENCE [LARGE SCALE MRNA]</scope>
</reference>
<reference key="6">
    <citation type="submission" date="2004-07" db="UniProtKB">
        <authorList>
            <person name="Bienvenut W.V."/>
            <person name="Potts A."/>
            <person name="Barblan J."/>
            <person name="Quadroni M."/>
        </authorList>
    </citation>
    <scope>PROTEIN SEQUENCE OF 2-17</scope>
    <scope>ACETYLATION AT ALA-2</scope>
    <scope>IDENTIFICATION BY MASS SPECTROMETRY</scope>
    <source>
        <tissue>B-cell lymphoma</tissue>
    </source>
</reference>
<reference key="7">
    <citation type="journal article" date="1998" name="Proc. Natl. Acad. Sci. U.S.A.">
        <title>The adenomatous polyposis coli-binding protein EB1 is associated with cytoplasmic and spindle microtubules.</title>
        <authorList>
            <person name="Berrueta L."/>
            <person name="Kraeft S.-K."/>
            <person name="Tirnauer J.S."/>
            <person name="Schuyler S.C."/>
            <person name="Chen L.B."/>
            <person name="Hill D.E."/>
            <person name="Pellman D."/>
            <person name="Bierer B.E."/>
        </authorList>
    </citation>
    <scope>SUBCELLULAR LOCATION</scope>
</reference>
<reference key="8">
    <citation type="journal article" date="1999" name="Curr. Biol.">
        <title>The APC-associated protein EB1 associates with components of the dynactin complex and cytoplasmic dynein intermediate chain.</title>
        <authorList>
            <person name="Berrueta L."/>
            <person name="Tirnauer J.S."/>
            <person name="Schuyler S.C."/>
            <person name="Pellman D."/>
            <person name="Bierer B.E."/>
        </authorList>
    </citation>
    <scope>INTERACTION WITH DCTN1; DCTN2 AND DYNEIN INTERMEDIATE CHAIN</scope>
</reference>
<reference key="9">
    <citation type="journal article" date="1999" name="Int. J. Cancer">
        <title>EB/RP gene family encodes tubulin binding proteins.</title>
        <authorList>
            <person name="Juwana J.-P."/>
            <person name="Henderikx P."/>
            <person name="Mischo A."/>
            <person name="Wadle A."/>
            <person name="Fadle N."/>
            <person name="Gerlach K."/>
            <person name="Arends J.W."/>
            <person name="Hoogenboom H."/>
            <person name="Pfreundschuh M."/>
            <person name="Renner C."/>
        </authorList>
    </citation>
    <scope>INTERACTION WITH TUBULIN</scope>
    <scope>SUBCELLULAR LOCATION</scope>
</reference>
<reference key="10">
    <citation type="journal article" date="2000" name="Oncogene">
        <title>EB3, a novel member of the EB1 family preferentially expressed in the central nervous system, binds to a CNS-specific APC homologue.</title>
        <authorList>
            <person name="Nakagawa H."/>
            <person name="Koyama K."/>
            <person name="Murata Y."/>
            <person name="Morito M."/>
            <person name="Akiyama T."/>
            <person name="Nakamura Y."/>
        </authorList>
    </citation>
    <scope>INTERACTION WITH APC2</scope>
    <scope>TISSUE SPECIFICITY</scope>
</reference>
<reference key="11">
    <citation type="journal article" date="2002" name="FEBS Lett.">
        <title>Involvement of the telomeric protein Pin2/TRF1 in the regulation of the mitotic spindle.</title>
        <authorList>
            <person name="Nakamura M."/>
            <person name="Zhen Zhou X."/>
            <person name="Kishi S."/>
            <person name="Ping Lu K."/>
        </authorList>
    </citation>
    <scope>INTERACTION WITH TERF1</scope>
</reference>
<reference key="12">
    <citation type="journal article" date="2002" name="Mol. Biol. Cell">
        <title>Evidence that an interaction between EB1 and p150(Glued) is required for the formation and maintenance of a radial microtubule array anchored at the centrosome.</title>
        <authorList>
            <person name="Askham J.M."/>
            <person name="Vaughan K.T."/>
            <person name="Goodson H.V."/>
            <person name="Morrison E.E."/>
        </authorList>
    </citation>
    <scope>INTERACTION WITH APC AND DCTN1</scope>
    <scope>SUBCELLULAR LOCATION</scope>
    <scope>FUNCTION</scope>
</reference>
<reference key="13">
    <citation type="journal article" date="2003" name="J. Biol. Chem.">
        <title>Characterization of functional domains of human EB1 family proteins.</title>
        <authorList>
            <person name="Bu W."/>
            <person name="Su L.-K."/>
        </authorList>
    </citation>
    <scope>CHARACTERIZATION</scope>
    <scope>INTERACTION WITH TUBULIN; APC AND DCTN1</scope>
</reference>
<reference key="14">
    <citation type="journal article" date="2003" name="Nature">
        <title>Proteomic characterization of the human centrosome by protein correlation profiling.</title>
        <authorList>
            <person name="Andersen J.S."/>
            <person name="Wilkinson C.J."/>
            <person name="Mayor T."/>
            <person name="Mortensen P."/>
            <person name="Nigg E.A."/>
            <person name="Mann M."/>
        </authorList>
    </citation>
    <scope>IDENTIFICATION BY MASS SPECTROMETRY</scope>
    <scope>SUBCELLULAR LOCATION [LARGE SCALE ANALYSIS]</scope>
    <source>
        <tissue>Lymphoblast</tissue>
    </source>
</reference>
<reference key="15">
    <citation type="journal article" date="2005" name="J. Cell Biol.">
        <title>CLASP1 and CLASP2 bind to EB1 and regulate microtubule plus-end dynamics at the cell cortex.</title>
        <authorList>
            <person name="Mimori-Kiyosue Y."/>
            <person name="Grigoriev I."/>
            <person name="Lansbergen G."/>
            <person name="Sasaki H."/>
            <person name="Matsui C."/>
            <person name="Severin F."/>
            <person name="Galjart N."/>
            <person name="Grosveld F."/>
            <person name="Vorobjev I."/>
            <person name="Tsukita S."/>
            <person name="Akhmanova A."/>
        </authorList>
    </citation>
    <scope>INTERACTION WITH CLASP1 AND CLASP2</scope>
</reference>
<reference key="16">
    <citation type="journal article" date="2005" name="Nat. Biotechnol.">
        <title>Immunoaffinity profiling of tyrosine phosphorylation in cancer cells.</title>
        <authorList>
            <person name="Rush J."/>
            <person name="Moritz A."/>
            <person name="Lee K.A."/>
            <person name="Guo A."/>
            <person name="Goss V.L."/>
            <person name="Spek E.J."/>
            <person name="Zhang H."/>
            <person name="Zha X.-M."/>
            <person name="Polakiewicz R.D."/>
            <person name="Comb M.J."/>
        </authorList>
    </citation>
    <scope>PHOSPHORYLATION [LARGE SCALE ANALYSIS] AT TYR-124</scope>
    <scope>IDENTIFICATION BY MASS SPECTROMETRY [LARGE SCALE ANALYSIS]</scope>
</reference>
<reference key="17">
    <citation type="journal article" date="2007" name="J. Biol. Chem.">
        <title>Regulated binding of adenomatous polyposis coli protein to actin.</title>
        <authorList>
            <person name="Moseley J.B."/>
            <person name="Bartolini F."/>
            <person name="Okada K."/>
            <person name="Wen Y."/>
            <person name="Gundersen G.G."/>
            <person name="Goode B.L."/>
        </authorList>
    </citation>
    <scope>INTERACTION WITH APC</scope>
</reference>
<reference key="18">
    <citation type="journal article" date="2007" name="Proc. Natl. Acad. Sci. U.S.A.">
        <title>Structural basis for tubulin recognition by cytoplasmic linker protein 170 and its autoinhibition.</title>
        <authorList>
            <person name="Mishima M."/>
            <person name="Maesaki R."/>
            <person name="Kasa M."/>
            <person name="Watanabe T."/>
            <person name="Fukata M."/>
            <person name="Kaibuchi K."/>
            <person name="Hakoshima T."/>
        </authorList>
    </citation>
    <scope>INTERACTION WITH CLIP1</scope>
</reference>
<reference key="19">
    <citation type="journal article" date="2009" name="Anal. Chem.">
        <title>Lys-N and trypsin cover complementary parts of the phosphoproteome in a refined SCX-based approach.</title>
        <authorList>
            <person name="Gauci S."/>
            <person name="Helbig A.O."/>
            <person name="Slijper M."/>
            <person name="Krijgsveld J."/>
            <person name="Heck A.J."/>
            <person name="Mohammed S."/>
        </authorList>
    </citation>
    <scope>ACETYLATION [LARGE SCALE ANALYSIS] AT ALA-2</scope>
    <scope>CLEAVAGE OF INITIATOR METHIONINE [LARGE SCALE ANALYSIS]</scope>
    <scope>IDENTIFICATION BY MASS SPECTROMETRY [LARGE SCALE ANALYSIS]</scope>
</reference>
<reference key="20">
    <citation type="journal article" date="2009" name="EMBO Rep.">
        <title>TIP150 interacts with and targets MCAK at the microtubule plus ends.</title>
        <authorList>
            <person name="Jiang K."/>
            <person name="Wang J."/>
            <person name="Liu J."/>
            <person name="Ward T."/>
            <person name="Wordeman L."/>
            <person name="Davidson A."/>
            <person name="Wang F."/>
            <person name="Yao X."/>
        </authorList>
    </citation>
    <scope>INTERACTION WITH MTUS2 AND KIF2C</scope>
</reference>
<reference key="21">
    <citation type="journal article" date="2009" name="J. Cell Biol.">
        <title>Mammalian end binding proteins control persistent microtubule growth.</title>
        <authorList>
            <person name="Komarova Y."/>
            <person name="De Groot C.O."/>
            <person name="Grigoriev I."/>
            <person name="Gouveia S.M."/>
            <person name="Munteanu E.L."/>
            <person name="Schober J.M."/>
            <person name="Honnappa S."/>
            <person name="Buey R.M."/>
            <person name="Hoogenraad C.C."/>
            <person name="Dogterom M."/>
            <person name="Borisy G.G."/>
            <person name="Steinmetz M.O."/>
            <person name="Akhmanova A."/>
        </authorList>
    </citation>
    <scope>INTERACTION WITH MAPRE3</scope>
</reference>
<reference key="22">
    <citation type="journal article" date="2009" name="Mol. Biol. Cell">
        <title>Interaction of CDK5RAP2 with EB1 to track growing microtubule tips and to regulate microtubule dynamics.</title>
        <authorList>
            <person name="Fong K.W."/>
            <person name="Hau S.Y."/>
            <person name="Kho Y.S."/>
            <person name="Jia Y."/>
            <person name="He L."/>
            <person name="Qi R.Z."/>
        </authorList>
    </citation>
    <scope>INTERACTION WITH CDK5RAP2</scope>
</reference>
<reference key="23">
    <citation type="journal article" date="2011" name="BMC Syst. Biol.">
        <title>Initial characterization of the human central proteome.</title>
        <authorList>
            <person name="Burkard T.R."/>
            <person name="Planyavsky M."/>
            <person name="Kaupe I."/>
            <person name="Breitwieser F.P."/>
            <person name="Buerckstuemmer T."/>
            <person name="Bennett K.L."/>
            <person name="Superti-Furga G."/>
            <person name="Colinge J."/>
        </authorList>
    </citation>
    <scope>IDENTIFICATION BY MASS SPECTROMETRY [LARGE SCALE ANALYSIS]</scope>
</reference>
<reference key="24">
    <citation type="journal article" date="2011" name="Cancer Res.">
        <title>Tumor suppressor RARRES1 interacts with cytoplasmic carboxypeptidase AGBL2 to regulate the alpha-tubulin tyrosination cycle.</title>
        <authorList>
            <person name="Sahab Z.J."/>
            <person name="Hall M.D."/>
            <person name="Me Sung Y."/>
            <person name="Dakshanamurthy S."/>
            <person name="Ji Y."/>
            <person name="Kumar D."/>
            <person name="Byers S.W."/>
        </authorList>
    </citation>
    <scope>INTERACTION WITH RARRES1 AND AGBL2</scope>
</reference>
<reference key="25">
    <citation type="journal article" date="2011" name="Curr. Biol.">
        <title>A complex of Kif18b and MCAK promotes microtubule depolymerization and is negatively regulated by Aurora kinases.</title>
        <authorList>
            <person name="Tanenbaum M.E."/>
            <person name="Macurek L."/>
            <person name="van der Vaart B."/>
            <person name="Galli M."/>
            <person name="Akhmanova A."/>
            <person name="Medema R.H."/>
        </authorList>
    </citation>
    <scope>INTERACTION WITH KIF18B</scope>
</reference>
<reference key="26">
    <citation type="journal article" date="2011" name="J. Cell Biol.">
        <title>SLAIN2 links microtubule plus end-tracking proteins and controls microtubule growth in interphase.</title>
        <authorList>
            <person name="van der Vaart B."/>
            <person name="Manatschal C."/>
            <person name="Grigoriev I."/>
            <person name="Olieric V."/>
            <person name="Gouveia S.M."/>
            <person name="Bjelic S."/>
            <person name="Demmers J."/>
            <person name="Vorobjev I."/>
            <person name="Hoogenraad C.C."/>
            <person name="Steinmetz M.O."/>
            <person name="Akhmanova A."/>
        </authorList>
    </citation>
    <scope>FUNCTION</scope>
    <scope>INTERACTION WITH SLAIN2; SLAIN1 AND CLIP1</scope>
    <scope>SUBCELLULAR LOCATION</scope>
</reference>
<reference key="27">
    <citation type="journal article" date="2012" name="J. Biol. Chem.">
        <title>Mitotic regulator SKAP forms a link between kinetochore core complex KMN and dynamic spindle microtubules.</title>
        <authorList>
            <person name="Wang X."/>
            <person name="Zhuang X."/>
            <person name="Cao D."/>
            <person name="Chu Y."/>
            <person name="Yao P."/>
            <person name="Liu W."/>
            <person name="Liu L."/>
            <person name="Adams G."/>
            <person name="Fang G."/>
            <person name="Dou Z."/>
            <person name="Ding X."/>
            <person name="Huang Y."/>
            <person name="Wang D."/>
            <person name="Yao X."/>
        </authorList>
    </citation>
    <scope>INTERACTION WITH KNSTRN</scope>
</reference>
<reference key="28">
    <citation type="journal article" date="2012" name="Mol. Cell. Proteomics">
        <title>Comparative large-scale characterisation of plant vs. mammal proteins reveals similar and idiosyncratic N-alpha acetylation features.</title>
        <authorList>
            <person name="Bienvenut W.V."/>
            <person name="Sumpton D."/>
            <person name="Martinez A."/>
            <person name="Lilla S."/>
            <person name="Espagne C."/>
            <person name="Meinnel T."/>
            <person name="Giglione C."/>
        </authorList>
    </citation>
    <scope>ACETYLATION [LARGE SCALE ANALYSIS] AT ALA-2</scope>
    <scope>CLEAVAGE OF INITIATOR METHIONINE [LARGE SCALE ANALYSIS]</scope>
    <scope>IDENTIFICATION BY MASS SPECTROMETRY [LARGE SCALE ANALYSIS]</scope>
</reference>
<reference key="29">
    <citation type="journal article" date="2012" name="Proc. Natl. Acad. Sci. U.S.A.">
        <title>N-terminal acetylome analyses and functional insights of the N-terminal acetyltransferase NatB.</title>
        <authorList>
            <person name="Van Damme P."/>
            <person name="Lasa M."/>
            <person name="Polevoda B."/>
            <person name="Gazquez C."/>
            <person name="Elosegui-Artola A."/>
            <person name="Kim D.S."/>
            <person name="De Juan-Pardo E."/>
            <person name="Demeyer K."/>
            <person name="Hole K."/>
            <person name="Larrea E."/>
            <person name="Timmerman E."/>
            <person name="Prieto J."/>
            <person name="Arnesen T."/>
            <person name="Sherman F."/>
            <person name="Gevaert K."/>
            <person name="Aldabe R."/>
        </authorList>
    </citation>
    <scope>ACETYLATION [LARGE SCALE ANALYSIS] AT ALA-2</scope>
    <scope>CLEAVAGE OF INITIATOR METHIONINE [LARGE SCALE ANALYSIS]</scope>
    <scope>IDENTIFICATION BY MASS SPECTROMETRY [LARGE SCALE ANALYSIS]</scope>
</reference>
<reference key="30">
    <citation type="journal article" date="2012" name="Proc. Natl. Acad. Sci. U.S.A.">
        <title>EB1 acetylation by P300/CBP-associated factor (PCAF) ensures accurate kinetochore-microtubule interactions in mitosis.</title>
        <authorList>
            <person name="Xia P."/>
            <person name="Wang Z."/>
            <person name="Liu X."/>
            <person name="Wu B."/>
            <person name="Wang J."/>
            <person name="Ward T."/>
            <person name="Zhang L."/>
            <person name="Ding X."/>
            <person name="Gibbons G."/>
            <person name="Shi Y."/>
            <person name="Yao X."/>
        </authorList>
    </citation>
    <scope>FUNCTION</scope>
    <scope>SUBCELLULAR LOCATION</scope>
    <scope>ACETYLATION AT LYS-220</scope>
    <scope>MUTAGENESIS OF LYS-220</scope>
</reference>
<reference key="31">
    <citation type="journal article" date="2013" name="J. Cell Biol.">
        <title>MISP is a novel Plk1 substrate required for proper spindle orientation and mitotic progression.</title>
        <authorList>
            <person name="Zhu M."/>
            <person name="Settele F."/>
            <person name="Kotak S."/>
            <person name="Sanchez-Pulido L."/>
            <person name="Ehret L."/>
            <person name="Ponting C.P."/>
            <person name="Goenczy P."/>
            <person name="Hoffmann I."/>
        </authorList>
    </citation>
    <scope>SUBCELLULAR LOCATION</scope>
    <scope>INTERACTION WITH MISP</scope>
</reference>
<reference key="32">
    <citation type="journal article" date="2013" name="J. Proteome Res.">
        <title>Toward a comprehensive characterization of a human cancer cell phosphoproteome.</title>
        <authorList>
            <person name="Zhou H."/>
            <person name="Di Palma S."/>
            <person name="Preisinger C."/>
            <person name="Peng M."/>
            <person name="Polat A.N."/>
            <person name="Heck A.J."/>
            <person name="Mohammed S."/>
        </authorList>
    </citation>
    <scope>PHOSPHORYLATION [LARGE SCALE ANALYSIS] AT SER-155 AND SER-165</scope>
    <scope>IDENTIFICATION BY MASS SPECTROMETRY [LARGE SCALE ANALYSIS]</scope>
    <source>
        <tissue>Cervix carcinoma</tissue>
        <tissue>Erythroleukemia</tissue>
    </source>
</reference>
<reference key="33">
    <citation type="journal article" date="2013" name="PLoS Biol.">
        <title>Dynactin subunit p150(Glued) is a neuron-specific anti-catastrophe factor.</title>
        <authorList>
            <person name="Lazarus J.E."/>
            <person name="Moughamian A.J."/>
            <person name="Tokito M.K."/>
            <person name="Holzbaur E.L."/>
        </authorList>
    </citation>
    <scope>INTERACTION WITH DCTN1</scope>
</reference>
<reference key="34">
    <citation type="journal article" date="2014" name="J. Cell Sci.">
        <title>GAS2-like proteins mediate communication between microtubules and actin through interactions with end-binding proteins.</title>
        <authorList>
            <person name="Stroud M.J."/>
            <person name="Nazgiewicz A."/>
            <person name="McKenzie E.A."/>
            <person name="Wang Y."/>
            <person name="Kammerer R.A."/>
            <person name="Ballestrem C."/>
        </authorList>
    </citation>
    <scope>INTERACTION WITH GAS2L1; GAS2L2 AND GAS2L3</scope>
</reference>
<reference key="35">
    <citation type="journal article" date="2014" name="J. Cell Sci.">
        <title>A newly identified myomegalin isoform functions in Golgi microtubule organization and ER-Golgi transport.</title>
        <authorList>
            <person name="Wang Z."/>
            <person name="Zhang C."/>
            <person name="Qi R.Z."/>
        </authorList>
    </citation>
    <scope>INTERACTION WITH PDE4DIP</scope>
    <scope>SUBCELLULAR LOCATION</scope>
</reference>
<reference key="36">
    <citation type="journal article" date="2014" name="J. Proteomics">
        <title>An enzyme assisted RP-RPLC approach for in-depth analysis of human liver phosphoproteome.</title>
        <authorList>
            <person name="Bian Y."/>
            <person name="Song C."/>
            <person name="Cheng K."/>
            <person name="Dong M."/>
            <person name="Wang F."/>
            <person name="Huang J."/>
            <person name="Sun D."/>
            <person name="Wang L."/>
            <person name="Ye M."/>
            <person name="Zou H."/>
        </authorList>
    </citation>
    <scope>IDENTIFICATION BY MASS SPECTROMETRY [LARGE SCALE ANALYSIS]</scope>
    <source>
        <tissue>Liver</tissue>
    </source>
</reference>
<reference key="37">
    <citation type="journal article" date="2015" name="PLoS ONE">
        <title>Cep169, a novel microtubule plus-end-tracking centrosomal protein, binds to CDK5RAP2 and regulates microtubule stability.</title>
        <authorList>
            <person name="Mori Y."/>
            <person name="Inoue Y."/>
            <person name="Tanaka S."/>
            <person name="Doda S."/>
            <person name="Yamanaka S."/>
            <person name="Fukuchi H."/>
            <person name="Terada Y."/>
        </authorList>
    </citation>
    <scope>INTERACTION WITH NCKAP5L</scope>
</reference>
<reference key="38">
    <citation type="journal article" date="2015" name="Proteomics">
        <title>N-terminome analysis of the human mitochondrial proteome.</title>
        <authorList>
            <person name="Vaca Jacome A.S."/>
            <person name="Rabilloud T."/>
            <person name="Schaeffer-Reiss C."/>
            <person name="Rompais M."/>
            <person name="Ayoub D."/>
            <person name="Lane L."/>
            <person name="Bairoch A."/>
            <person name="Van Dorsselaer A."/>
            <person name="Carapito C."/>
        </authorList>
    </citation>
    <scope>IDENTIFICATION BY MASS SPECTROMETRY [LARGE SCALE ANALYSIS]</scope>
</reference>
<reference key="39">
    <citation type="journal article" date="2016" name="Nat. Commun.">
        <title>EB1 regulates attachment of Ska1 with microtubules by forming extended structures on the microtubule lattice.</title>
        <authorList>
            <person name="Thomas G.E."/>
            <person name="Bandopadhyay K."/>
            <person name="Sutradhar S."/>
            <person name="Renjith M.R."/>
            <person name="Singh P."/>
            <person name="Gireesh K.K."/>
            <person name="Simon S."/>
            <person name="Badarudeen B."/>
            <person name="Gupta H."/>
            <person name="Banerjee M."/>
            <person name="Paul R."/>
            <person name="Mitra J."/>
            <person name="Manna T.K."/>
        </authorList>
    </citation>
    <scope>FUNCTION</scope>
    <scope>INTERACTION WITH SKA1</scope>
    <scope>SUBCELLULAR LOCATION</scope>
    <scope>MUTAGENESIS OF LYS-89</scope>
</reference>
<reference key="40">
    <citation type="journal article" date="2017" name="FEBS Lett.">
        <title>Noncentrosomal microtubules regulate autophagosome transport through CAMSAP2-EB1 cross-talk.</title>
        <authorList>
            <person name="Wei J."/>
            <person name="Xu H."/>
            <person name="Meng W."/>
        </authorList>
    </citation>
    <scope>FUNCTION</scope>
    <scope>INTERACTION WITH CAMSAP2</scope>
</reference>
<reference key="41">
    <citation type="journal article" date="2017" name="J. Cell Biol.">
        <title>EB1 and EB3 regulate microtubule minus end organization and Golgi morphology.</title>
        <authorList>
            <person name="Yang C."/>
            <person name="Wu J."/>
            <person name="de Heus C."/>
            <person name="Grigoriev I."/>
            <person name="Liv N."/>
            <person name="Yao Y."/>
            <person name="Smal I."/>
            <person name="Meijering E."/>
            <person name="Klumperman J."/>
            <person name="Qi R.Z."/>
            <person name="Akhmanova A."/>
        </authorList>
    </citation>
    <scope>FUNCTION</scope>
    <scope>INTERACTION WITH AKAP9 AND PDE4DIP</scope>
</reference>
<reference key="42">
    <citation type="journal article" date="2017" name="Proc. Natl. Acad. Sci. U.S.A.">
        <title>EB1-binding-myomegalin protein complex promotes centrosomal microtubules functions.</title>
        <authorList>
            <person name="Bouguenina H."/>
            <person name="Salaun D."/>
            <person name="Mangon A."/>
            <person name="Muller L."/>
            <person name="Baudelet E."/>
            <person name="Camoin L."/>
            <person name="Tachibana T."/>
            <person name="Cianferani S."/>
            <person name="Audebert S."/>
            <person name="Verdier-Pinard P."/>
            <person name="Badache A."/>
        </authorList>
    </citation>
    <scope>INTERACTION WITH AKAP9; CDK5RAP2 AND PDE4DIP</scope>
</reference>
<reference key="43">
    <citation type="journal article" date="2021" name="Nat. Chem. Biol.">
        <title>Dynamic crotonylation of EB1 by TIP60 ensures accurate spindle positioning in mitosis.</title>
        <authorList>
            <person name="Song X."/>
            <person name="Yang F."/>
            <person name="Liu X."/>
            <person name="Xia P."/>
            <person name="Yin W."/>
            <person name="Wang Z."/>
            <person name="Wang Y."/>
            <person name="Yuan X."/>
            <person name="Dou Z."/>
            <person name="Jiang K."/>
            <person name="Ma M."/>
            <person name="Hu B."/>
            <person name="Zhang R."/>
            <person name="Xu C."/>
            <person name="Zhang Z."/>
            <person name="Ruan K."/>
            <person name="Tian R."/>
            <person name="Li L."/>
            <person name="Liu T."/>
            <person name="Hill D.L."/>
            <person name="Zang J."/>
            <person name="Liu X."/>
            <person name="Li J."/>
            <person name="Cheng J."/>
            <person name="Yao X."/>
        </authorList>
    </citation>
    <scope>FUNCTION</scope>
    <scope>SUBCELLULAR LOCATION</scope>
    <scope>CROTONYLATION AT LYS-66</scope>
    <scope>MUTAGENESIS OF LYS-66</scope>
</reference>
<reference key="44">
    <citation type="journal article" date="2023" name="J. Biol. Chem.">
        <title>Kinetochore-microtubule attachment in human cells is regulated by the interaction of a conserved motif of Ska1 with EB1.</title>
        <authorList>
            <person name="Radhakrishnan R.M."/>
            <person name="Kizhakkeduth S.T."/>
            <person name="Nair V.M."/>
            <person name="Ayyappan S."/>
            <person name="Lakshmi R.B."/>
            <person name="Babu N."/>
            <person name="Prasannajith A."/>
            <person name="Umeda K."/>
            <person name="Vijayan V."/>
            <person name="Kodera N."/>
            <person name="Manna T.K."/>
        </authorList>
    </citation>
    <scope>FUNCTION</scope>
    <scope>SUBUNIT</scope>
    <scope>INTERACTION WITH SKA1</scope>
</reference>
<reference key="45">
    <citation type="journal article" date="2005" name="EMBO J.">
        <title>Structural insights into the EB1-APC interaction.</title>
        <authorList>
            <person name="Honnappa S."/>
            <person name="John C.M."/>
            <person name="Kostrewa D."/>
            <person name="Winkler F.K."/>
            <person name="Steinmetz M.O."/>
        </authorList>
    </citation>
    <scope>X-RAY CRYSTALLOGRAPHY (1.54 ANGSTROMS) OF 191-268</scope>
    <scope>DIMERIZATION</scope>
    <scope>INTERACTION WITH APC</scope>
</reference>
<reference key="46">
    <citation type="journal article" date="2003" name="J. Biol. Chem.">
        <title>Crystal structure of the amino-terminal microtubule-binding domain of end-binding protein 1 (EB1).</title>
        <authorList>
            <person name="Hayashi I."/>
            <person name="Ikura M."/>
        </authorList>
    </citation>
    <scope>X-RAY CRYSTALLOGRAPHY (1.45 ANGSTROMS) OF 1-130</scope>
    <scope>MUTAGENESIS OF 59-LYS-LYS-60 AND LYS-89</scope>
</reference>
<reference key="47">
    <citation type="journal article" date="2005" name="Mol. Cell">
        <title>Structural basis for the activation of microtubule assembly by the EB1 and p150Glued complex.</title>
        <authorList>
            <person name="Hayashi I."/>
            <person name="Wilde A."/>
            <person name="Mal T.K."/>
            <person name="Ikura M."/>
        </authorList>
    </citation>
    <scope>X-RAY CRYSTALLOGRAPHY (1.8 ANGSTROMS) OF 183-268 IN COMPLEX WITH DCTN1</scope>
    <scope>FUNCTION</scope>
    <scope>SUBUNIT</scope>
    <scope>INTERACTION WITH DCTN1</scope>
    <scope>SUBCELLULAR LOCATION</scope>
</reference>
<reference key="48">
    <citation type="journal article" date="2006" name="Mol. Cell">
        <title>Key interaction modes of dynamic +TIP networks.</title>
        <authorList>
            <person name="Honnappa S."/>
            <person name="Okhrimenko O."/>
            <person name="Jaussi R."/>
            <person name="Jawhari H."/>
            <person name="Jelesarov I."/>
            <person name="Winkler F.K."/>
            <person name="Steinmetz M.O."/>
        </authorList>
    </citation>
    <scope>X-RAY CRYSTALLOGRAPHY (1.93 ANGSTROMS) OF 191-267 IN COMPLEX WITH DCTN1</scope>
</reference>
<reference key="49">
    <citation type="journal article" date="2007" name="Mol. Cell">
        <title>Structural basis of microtubule plus end tracking by XMAP215, CLIP-170, and EB1.</title>
        <authorList>
            <person name="Slep K.C."/>
            <person name="Vale R.D."/>
        </authorList>
    </citation>
    <scope>X-RAY CRYSTALLOGRAPHY (1.25 ANGSTROMS) OF 12-133</scope>
</reference>
<reference key="50">
    <citation type="journal article" date="2009" name="Cell">
        <title>An EB1-binding motif acts as a microtubule tip localization signal.</title>
        <authorList>
            <person name="Honnappa S."/>
            <person name="Gouveia S.M."/>
            <person name="Weisbrich A."/>
            <person name="Damberger F.F."/>
            <person name="Bhavesh N.S."/>
            <person name="Jawhari H."/>
            <person name="Grigoriev I."/>
            <person name="van Rijssel F.J."/>
            <person name="Buey R.M."/>
            <person name="Lawera A."/>
            <person name="Jelesarov I."/>
            <person name="Winkler F.K."/>
            <person name="Wuthrich K."/>
            <person name="Akhmanova A."/>
            <person name="Steinmetz M.O."/>
        </authorList>
    </citation>
    <scope>X-RAY CRYSTALLOGRAPHY (2.5 ANGSTROMS) OF 191-260 IN COMPLEX WITH DST</scope>
    <scope>FUNCTION</scope>
    <scope>INTERACTION WITH APC; CLASP2; KIF2C AND STIM1</scope>
    <scope>SUBCELLULAR LOCATION</scope>
</reference>
<dbReference type="EMBL" id="U24166">
    <property type="protein sequence ID" value="AAC09471.1"/>
    <property type="molecule type" value="mRNA"/>
</dbReference>
<dbReference type="EMBL" id="AK312590">
    <property type="protein sequence ID" value="BAG35484.1"/>
    <property type="molecule type" value="mRNA"/>
</dbReference>
<dbReference type="EMBL" id="AL035071">
    <property type="status" value="NOT_ANNOTATED_CDS"/>
    <property type="molecule type" value="Genomic_DNA"/>
</dbReference>
<dbReference type="EMBL" id="CH471077">
    <property type="protein sequence ID" value="EAW76348.1"/>
    <property type="molecule type" value="Genomic_DNA"/>
</dbReference>
<dbReference type="EMBL" id="CH471077">
    <property type="protein sequence ID" value="EAW76349.1"/>
    <property type="molecule type" value="Genomic_DNA"/>
</dbReference>
<dbReference type="EMBL" id="BC106068">
    <property type="protein sequence ID" value="AAI06069.1"/>
    <property type="molecule type" value="mRNA"/>
</dbReference>
<dbReference type="EMBL" id="BC109281">
    <property type="protein sequence ID" value="AAI09282.1"/>
    <property type="molecule type" value="mRNA"/>
</dbReference>
<dbReference type="CCDS" id="CCDS13208.1"/>
<dbReference type="PIR" id="I52726">
    <property type="entry name" value="I52726"/>
</dbReference>
<dbReference type="RefSeq" id="NP_036457.1">
    <property type="nucleotide sequence ID" value="NM_012325.3"/>
</dbReference>
<dbReference type="RefSeq" id="XP_011526998.1">
    <property type="nucleotide sequence ID" value="XM_011528696.3"/>
</dbReference>
<dbReference type="RefSeq" id="XP_054179179.1">
    <property type="nucleotide sequence ID" value="XM_054323204.1"/>
</dbReference>
<dbReference type="PDB" id="1PA7">
    <property type="method" value="X-ray"/>
    <property type="resolution" value="1.45 A"/>
    <property type="chains" value="A=1-130"/>
</dbReference>
<dbReference type="PDB" id="1TXQ">
    <property type="method" value="X-ray"/>
    <property type="resolution" value="1.80 A"/>
    <property type="chains" value="B=183-268"/>
</dbReference>
<dbReference type="PDB" id="1UEG">
    <property type="method" value="X-ray"/>
    <property type="resolution" value="2.40 A"/>
    <property type="chains" value="A=1-130"/>
</dbReference>
<dbReference type="PDB" id="1VKA">
    <property type="method" value="X-ray"/>
    <property type="resolution" value="1.60 A"/>
    <property type="chains" value="A/B=2-140"/>
</dbReference>
<dbReference type="PDB" id="1WU9">
    <property type="method" value="X-ray"/>
    <property type="resolution" value="1.54 A"/>
    <property type="chains" value="A/B=191-268"/>
</dbReference>
<dbReference type="PDB" id="1YIB">
    <property type="method" value="X-ray"/>
    <property type="resolution" value="1.80 A"/>
    <property type="chains" value="A=185-255"/>
</dbReference>
<dbReference type="PDB" id="1YIG">
    <property type="method" value="X-ray"/>
    <property type="resolution" value="2.00 A"/>
    <property type="chains" value="A/B=185-255"/>
</dbReference>
<dbReference type="PDB" id="2HKQ">
    <property type="method" value="X-ray"/>
    <property type="resolution" value="1.86 A"/>
    <property type="chains" value="A=191-268"/>
</dbReference>
<dbReference type="PDB" id="2HL3">
    <property type="method" value="X-ray"/>
    <property type="resolution" value="2.03 A"/>
    <property type="chains" value="C=263-268"/>
</dbReference>
<dbReference type="PDB" id="2HL5">
    <property type="method" value="X-ray"/>
    <property type="resolution" value="1.93 A"/>
    <property type="chains" value="A/B=191-268"/>
</dbReference>
<dbReference type="PDB" id="2QJZ">
    <property type="method" value="X-ray"/>
    <property type="resolution" value="1.25 A"/>
    <property type="chains" value="A/B=12-133"/>
</dbReference>
<dbReference type="PDB" id="2R8U">
    <property type="method" value="X-ray"/>
    <property type="resolution" value="1.35 A"/>
    <property type="chains" value="A/B=1-268"/>
</dbReference>
<dbReference type="PDB" id="3GJO">
    <property type="method" value="X-ray"/>
    <property type="resolution" value="2.50 A"/>
    <property type="chains" value="A/B/C/D=191-260"/>
</dbReference>
<dbReference type="PDB" id="3MTU">
    <property type="method" value="X-ray"/>
    <property type="resolution" value="2.10 A"/>
    <property type="chains" value="A/B/C/D=215-257"/>
</dbReference>
<dbReference type="PDB" id="3MUD">
    <property type="method" value="X-ray"/>
    <property type="resolution" value="2.20 A"/>
    <property type="chains" value="C/D=226-257"/>
</dbReference>
<dbReference type="PDB" id="3TQ7">
    <property type="method" value="X-ray"/>
    <property type="resolution" value="2.30 A"/>
    <property type="chains" value="A=191-268"/>
</dbReference>
<dbReference type="PDB" id="4XA1">
    <property type="method" value="X-ray"/>
    <property type="resolution" value="3.20 A"/>
    <property type="chains" value="A/B/C/D=211-251"/>
</dbReference>
<dbReference type="PDB" id="4XA3">
    <property type="method" value="X-ray"/>
    <property type="resolution" value="2.55 A"/>
    <property type="chains" value="A/B=215-251"/>
</dbReference>
<dbReference type="PDB" id="4XA6">
    <property type="method" value="X-ray"/>
    <property type="resolution" value="3.42 A"/>
    <property type="chains" value="A/B/C/D=209-251"/>
</dbReference>
<dbReference type="PDB" id="5JV3">
    <property type="method" value="X-ray"/>
    <property type="resolution" value="2.01 A"/>
    <property type="chains" value="A/B/C/D=210-257"/>
</dbReference>
<dbReference type="PDB" id="5JVM">
    <property type="method" value="X-ray"/>
    <property type="resolution" value="1.57 A"/>
    <property type="chains" value="A/B=207-257"/>
</dbReference>
<dbReference type="PDB" id="5JVP">
    <property type="method" value="X-ray"/>
    <property type="resolution" value="2.10 A"/>
    <property type="chains" value="A/B/C/D/E/F=210-257"/>
</dbReference>
<dbReference type="PDB" id="5JVR">
    <property type="method" value="X-ray"/>
    <property type="resolution" value="2.10 A"/>
    <property type="chains" value="A/B/C/D/E/F/G/H=207-257"/>
</dbReference>
<dbReference type="PDB" id="5JVS">
    <property type="method" value="X-ray"/>
    <property type="resolution" value="2.25 A"/>
    <property type="chains" value="A=207-257"/>
</dbReference>
<dbReference type="PDB" id="5JVU">
    <property type="method" value="X-ray"/>
    <property type="resolution" value="1.95 A"/>
    <property type="chains" value="A/B=207-257"/>
</dbReference>
<dbReference type="PDB" id="5JX1">
    <property type="method" value="X-ray"/>
    <property type="resolution" value="1.67 A"/>
    <property type="chains" value="A=210-257"/>
</dbReference>
<dbReference type="PDB" id="5WLQ">
    <property type="method" value="X-ray"/>
    <property type="resolution" value="3.10 A"/>
    <property type="chains" value="A=208-257"/>
</dbReference>
<dbReference type="PDB" id="6PF2">
    <property type="method" value="X-ray"/>
    <property type="resolution" value="2.17 A"/>
    <property type="chains" value="A/B=207-257"/>
</dbReference>
<dbReference type="PDB" id="6PFP">
    <property type="method" value="X-ray"/>
    <property type="resolution" value="2.20 A"/>
    <property type="chains" value="A/B/C/D=207-257"/>
</dbReference>
<dbReference type="PDB" id="6YF5">
    <property type="method" value="X-ray"/>
    <property type="resolution" value="1.83 A"/>
    <property type="chains" value="A/B/C/D=215-251"/>
</dbReference>
<dbReference type="PDB" id="6YSH">
    <property type="method" value="X-ray"/>
    <property type="resolution" value="2.83 A"/>
    <property type="chains" value="A=215-251, B=215-250"/>
</dbReference>
<dbReference type="PDBsum" id="1PA7"/>
<dbReference type="PDBsum" id="1TXQ"/>
<dbReference type="PDBsum" id="1UEG"/>
<dbReference type="PDBsum" id="1VKA"/>
<dbReference type="PDBsum" id="1WU9"/>
<dbReference type="PDBsum" id="1YIB"/>
<dbReference type="PDBsum" id="1YIG"/>
<dbReference type="PDBsum" id="2HKQ"/>
<dbReference type="PDBsum" id="2HL3"/>
<dbReference type="PDBsum" id="2HL5"/>
<dbReference type="PDBsum" id="2QJZ"/>
<dbReference type="PDBsum" id="2R8U"/>
<dbReference type="PDBsum" id="3GJO"/>
<dbReference type="PDBsum" id="3MTU"/>
<dbReference type="PDBsum" id="3MUD"/>
<dbReference type="PDBsum" id="3TQ7"/>
<dbReference type="PDBsum" id="4XA1"/>
<dbReference type="PDBsum" id="4XA3"/>
<dbReference type="PDBsum" id="4XA6"/>
<dbReference type="PDBsum" id="5JV3"/>
<dbReference type="PDBsum" id="5JVM"/>
<dbReference type="PDBsum" id="5JVP"/>
<dbReference type="PDBsum" id="5JVR"/>
<dbReference type="PDBsum" id="5JVS"/>
<dbReference type="PDBsum" id="5JVU"/>
<dbReference type="PDBsum" id="5JX1"/>
<dbReference type="PDBsum" id="5WLQ"/>
<dbReference type="PDBsum" id="6PF2"/>
<dbReference type="PDBsum" id="6PFP"/>
<dbReference type="PDBsum" id="6YF5"/>
<dbReference type="PDBsum" id="6YSH"/>
<dbReference type="BMRB" id="Q15691"/>
<dbReference type="EMDB" id="EMD-2912"/>
<dbReference type="EMDB" id="EMD-2915"/>
<dbReference type="EMDB" id="EMD-2916"/>
<dbReference type="EMDB" id="EMD-2918"/>
<dbReference type="SMR" id="Q15691"/>
<dbReference type="BioGRID" id="116581">
    <property type="interactions" value="523"/>
</dbReference>
<dbReference type="CORUM" id="Q15691"/>
<dbReference type="DIP" id="DIP-38018N"/>
<dbReference type="ELM" id="Q15691"/>
<dbReference type="FunCoup" id="Q15691">
    <property type="interactions" value="1391"/>
</dbReference>
<dbReference type="IntAct" id="Q15691">
    <property type="interactions" value="384"/>
</dbReference>
<dbReference type="MINT" id="Q15691"/>
<dbReference type="STRING" id="9606.ENSP00000364721"/>
<dbReference type="GlyCosmos" id="Q15691">
    <property type="glycosylation" value="1 site, 1 glycan"/>
</dbReference>
<dbReference type="GlyGen" id="Q15691">
    <property type="glycosylation" value="4 sites, 1 O-linked glycan (4 sites)"/>
</dbReference>
<dbReference type="iPTMnet" id="Q15691"/>
<dbReference type="MetOSite" id="Q15691"/>
<dbReference type="PhosphoSitePlus" id="Q15691"/>
<dbReference type="SwissPalm" id="Q15691"/>
<dbReference type="BioMuta" id="MAPRE1"/>
<dbReference type="DMDM" id="20138589"/>
<dbReference type="OGP" id="Q15691"/>
<dbReference type="REPRODUCTION-2DPAGE" id="IPI00017596"/>
<dbReference type="jPOST" id="Q15691"/>
<dbReference type="MassIVE" id="Q15691"/>
<dbReference type="PaxDb" id="9606-ENSP00000364721"/>
<dbReference type="PeptideAtlas" id="Q15691"/>
<dbReference type="ProteomicsDB" id="60702"/>
<dbReference type="Pumba" id="Q15691"/>
<dbReference type="Antibodypedia" id="1211">
    <property type="antibodies" value="286 antibodies from 34 providers"/>
</dbReference>
<dbReference type="DNASU" id="22919"/>
<dbReference type="Ensembl" id="ENST00000375571.6">
    <property type="protein sequence ID" value="ENSP00000364721.5"/>
    <property type="gene ID" value="ENSG00000101367.9"/>
</dbReference>
<dbReference type="GeneID" id="22919"/>
<dbReference type="KEGG" id="hsa:22919"/>
<dbReference type="MANE-Select" id="ENST00000375571.6">
    <property type="protein sequence ID" value="ENSP00000364721.5"/>
    <property type="RefSeq nucleotide sequence ID" value="NM_012325.3"/>
    <property type="RefSeq protein sequence ID" value="NP_036457.1"/>
</dbReference>
<dbReference type="UCSC" id="uc002wyh.3">
    <property type="organism name" value="human"/>
</dbReference>
<dbReference type="AGR" id="HGNC:6890"/>
<dbReference type="CTD" id="22919"/>
<dbReference type="DisGeNET" id="22919"/>
<dbReference type="GeneCards" id="MAPRE1"/>
<dbReference type="HGNC" id="HGNC:6890">
    <property type="gene designation" value="MAPRE1"/>
</dbReference>
<dbReference type="HPA" id="ENSG00000101367">
    <property type="expression patterns" value="Low tissue specificity"/>
</dbReference>
<dbReference type="MIM" id="603108">
    <property type="type" value="gene"/>
</dbReference>
<dbReference type="neXtProt" id="NX_Q15691"/>
<dbReference type="OpenTargets" id="ENSG00000101367"/>
<dbReference type="PharmGKB" id="PA30634"/>
<dbReference type="VEuPathDB" id="HostDB:ENSG00000101367"/>
<dbReference type="eggNOG" id="KOG3000">
    <property type="taxonomic scope" value="Eukaryota"/>
</dbReference>
<dbReference type="GeneTree" id="ENSGT00490000043329"/>
<dbReference type="HOGENOM" id="CLU_041744_1_1_1"/>
<dbReference type="InParanoid" id="Q15691"/>
<dbReference type="OMA" id="TVLEHEY"/>
<dbReference type="OrthoDB" id="2119228at2759"/>
<dbReference type="PAN-GO" id="Q15691">
    <property type="GO annotations" value="8 GO annotations based on evolutionary models"/>
</dbReference>
<dbReference type="PhylomeDB" id="Q15691"/>
<dbReference type="TreeFam" id="TF313620"/>
<dbReference type="PathwayCommons" id="Q15691"/>
<dbReference type="Reactome" id="R-HSA-141444">
    <property type="pathway name" value="Amplification of signal from unattached kinetochores via a MAD2 inhibitory signal"/>
</dbReference>
<dbReference type="Reactome" id="R-HSA-2467813">
    <property type="pathway name" value="Separation of Sister Chromatids"/>
</dbReference>
<dbReference type="Reactome" id="R-HSA-2500257">
    <property type="pathway name" value="Resolution of Sister Chromatid Cohesion"/>
</dbReference>
<dbReference type="Reactome" id="R-HSA-2565942">
    <property type="pathway name" value="Regulation of PLK1 Activity at G2/M Transition"/>
</dbReference>
<dbReference type="Reactome" id="R-HSA-380259">
    <property type="pathway name" value="Loss of Nlp from mitotic centrosomes"/>
</dbReference>
<dbReference type="Reactome" id="R-HSA-380270">
    <property type="pathway name" value="Recruitment of mitotic centrosome proteins and complexes"/>
</dbReference>
<dbReference type="Reactome" id="R-HSA-380284">
    <property type="pathway name" value="Loss of proteins required for interphase microtubule organization from the centrosome"/>
</dbReference>
<dbReference type="Reactome" id="R-HSA-380320">
    <property type="pathway name" value="Recruitment of NuMA to mitotic centrosomes"/>
</dbReference>
<dbReference type="Reactome" id="R-HSA-5620912">
    <property type="pathway name" value="Anchoring of the basal body to the plasma membrane"/>
</dbReference>
<dbReference type="Reactome" id="R-HSA-5663220">
    <property type="pathway name" value="RHO GTPases Activate Formins"/>
</dbReference>
<dbReference type="Reactome" id="R-HSA-68877">
    <property type="pathway name" value="Mitotic Prometaphase"/>
</dbReference>
<dbReference type="Reactome" id="R-HSA-8852276">
    <property type="pathway name" value="The role of GTSE1 in G2/M progression after G2 checkpoint"/>
</dbReference>
<dbReference type="Reactome" id="R-HSA-8854518">
    <property type="pathway name" value="AURKA Activation by TPX2"/>
</dbReference>
<dbReference type="Reactome" id="R-HSA-9648025">
    <property type="pathway name" value="EML4 and NUDC in mitotic spindle formation"/>
</dbReference>
<dbReference type="SignaLink" id="Q15691"/>
<dbReference type="SIGNOR" id="Q15691"/>
<dbReference type="BioGRID-ORCS" id="22919">
    <property type="hits" value="132 hits in 1165 CRISPR screens"/>
</dbReference>
<dbReference type="CD-CODE" id="8C2F96ED">
    <property type="entry name" value="Centrosome"/>
</dbReference>
<dbReference type="CD-CODE" id="DEE660B4">
    <property type="entry name" value="Stress granule"/>
</dbReference>
<dbReference type="CD-CODE" id="FB4E32DD">
    <property type="entry name" value="Presynaptic clusters and postsynaptic densities"/>
</dbReference>
<dbReference type="ChiTaRS" id="MAPRE1">
    <property type="organism name" value="human"/>
</dbReference>
<dbReference type="EvolutionaryTrace" id="Q15691"/>
<dbReference type="GeneWiki" id="MAPRE1"/>
<dbReference type="GenomeRNAi" id="22919"/>
<dbReference type="Pharos" id="Q15691">
    <property type="development level" value="Tbio"/>
</dbReference>
<dbReference type="PRO" id="PR:Q15691"/>
<dbReference type="Proteomes" id="UP000005640">
    <property type="component" value="Chromosome 20"/>
</dbReference>
<dbReference type="RNAct" id="Q15691">
    <property type="molecule type" value="protein"/>
</dbReference>
<dbReference type="Bgee" id="ENSG00000101367">
    <property type="expression patterns" value="Expressed in secondary oocyte and 211 other cell types or tissues"/>
</dbReference>
<dbReference type="GO" id="GO:0031253">
    <property type="term" value="C:cell projection membrane"/>
    <property type="evidence" value="ECO:0007669"/>
    <property type="project" value="Ensembl"/>
</dbReference>
<dbReference type="GO" id="GO:0005813">
    <property type="term" value="C:centrosome"/>
    <property type="evidence" value="ECO:0000314"/>
    <property type="project" value="UniProtKB"/>
</dbReference>
<dbReference type="GO" id="GO:0036064">
    <property type="term" value="C:ciliary basal body"/>
    <property type="evidence" value="ECO:0007669"/>
    <property type="project" value="Ensembl"/>
</dbReference>
<dbReference type="GO" id="GO:0030981">
    <property type="term" value="C:cortical microtubule cytoskeleton"/>
    <property type="evidence" value="ECO:0000314"/>
    <property type="project" value="UniProtKB"/>
</dbReference>
<dbReference type="GO" id="GO:0005881">
    <property type="term" value="C:cytoplasmic microtubule"/>
    <property type="evidence" value="ECO:0000318"/>
    <property type="project" value="GO_Central"/>
</dbReference>
<dbReference type="GO" id="GO:0005829">
    <property type="term" value="C:cytosol"/>
    <property type="evidence" value="ECO:0000304"/>
    <property type="project" value="Reactome"/>
</dbReference>
<dbReference type="GO" id="GO:0005925">
    <property type="term" value="C:focal adhesion"/>
    <property type="evidence" value="ECO:0000314"/>
    <property type="project" value="ARUK-UCL"/>
</dbReference>
<dbReference type="GO" id="GO:0005794">
    <property type="term" value="C:Golgi apparatus"/>
    <property type="evidence" value="ECO:0007669"/>
    <property type="project" value="UniProtKB-SubCell"/>
</dbReference>
<dbReference type="GO" id="GO:0005874">
    <property type="term" value="C:microtubule"/>
    <property type="evidence" value="ECO:0000314"/>
    <property type="project" value="UniProtKB"/>
</dbReference>
<dbReference type="GO" id="GO:0005815">
    <property type="term" value="C:microtubule organizing center"/>
    <property type="evidence" value="ECO:0000318"/>
    <property type="project" value="GO_Central"/>
</dbReference>
<dbReference type="GO" id="GO:0035371">
    <property type="term" value="C:microtubule plus-end"/>
    <property type="evidence" value="ECO:0000318"/>
    <property type="project" value="GO_Central"/>
</dbReference>
<dbReference type="GO" id="GO:1905721">
    <property type="term" value="C:mitotic spindle astral microtubule end"/>
    <property type="evidence" value="ECO:0000314"/>
    <property type="project" value="UniProtKB"/>
</dbReference>
<dbReference type="GO" id="GO:1990498">
    <property type="term" value="C:mitotic spindle microtubule"/>
    <property type="evidence" value="ECO:0000314"/>
    <property type="project" value="UniProtKB"/>
</dbReference>
<dbReference type="GO" id="GO:0097431">
    <property type="term" value="C:mitotic spindle pole"/>
    <property type="evidence" value="ECO:0000314"/>
    <property type="project" value="UniProtKB"/>
</dbReference>
<dbReference type="GO" id="GO:0051233">
    <property type="term" value="C:spindle midzone"/>
    <property type="evidence" value="ECO:0000318"/>
    <property type="project" value="GO_Central"/>
</dbReference>
<dbReference type="GO" id="GO:0045296">
    <property type="term" value="F:cadherin binding"/>
    <property type="evidence" value="ECO:0007005"/>
    <property type="project" value="BHF-UCL"/>
</dbReference>
<dbReference type="GO" id="GO:0042802">
    <property type="term" value="F:identical protein binding"/>
    <property type="evidence" value="ECO:0000353"/>
    <property type="project" value="IntAct"/>
</dbReference>
<dbReference type="GO" id="GO:0051010">
    <property type="term" value="F:microtubule plus-end binding"/>
    <property type="evidence" value="ECO:0000314"/>
    <property type="project" value="UniProtKB"/>
</dbReference>
<dbReference type="GO" id="GO:0120283">
    <property type="term" value="F:protein serine/threonine kinase binding"/>
    <property type="evidence" value="ECO:0000353"/>
    <property type="project" value="ARUK-UCL"/>
</dbReference>
<dbReference type="GO" id="GO:0003723">
    <property type="term" value="F:RNA binding"/>
    <property type="evidence" value="ECO:0007005"/>
    <property type="project" value="UniProtKB"/>
</dbReference>
<dbReference type="GO" id="GO:0051315">
    <property type="term" value="P:attachment of mitotic spindle microtubules to kinetochore"/>
    <property type="evidence" value="ECO:0000314"/>
    <property type="project" value="UniProtKB"/>
</dbReference>
<dbReference type="GO" id="GO:0051301">
    <property type="term" value="P:cell division"/>
    <property type="evidence" value="ECO:0007669"/>
    <property type="project" value="UniProtKB-KW"/>
</dbReference>
<dbReference type="GO" id="GO:0016477">
    <property type="term" value="P:cell migration"/>
    <property type="evidence" value="ECO:0000315"/>
    <property type="project" value="ARUK-UCL"/>
</dbReference>
<dbReference type="GO" id="GO:0000132">
    <property type="term" value="P:establishment of mitotic spindle orientation"/>
    <property type="evidence" value="ECO:0000314"/>
    <property type="project" value="UniProtKB"/>
</dbReference>
<dbReference type="GO" id="GO:0001578">
    <property type="term" value="P:microtubule bundle formation"/>
    <property type="evidence" value="ECO:0007669"/>
    <property type="project" value="Ensembl"/>
</dbReference>
<dbReference type="GO" id="GO:0046785">
    <property type="term" value="P:microtubule polymerization"/>
    <property type="evidence" value="ECO:0007669"/>
    <property type="project" value="Ensembl"/>
</dbReference>
<dbReference type="GO" id="GO:0031115">
    <property type="term" value="P:negative regulation of microtubule polymerization"/>
    <property type="evidence" value="ECO:0000314"/>
    <property type="project" value="UniProtKB"/>
</dbReference>
<dbReference type="GO" id="GO:1905515">
    <property type="term" value="P:non-motile cilium assembly"/>
    <property type="evidence" value="ECO:0007669"/>
    <property type="project" value="Ensembl"/>
</dbReference>
<dbReference type="GO" id="GO:0031116">
    <property type="term" value="P:positive regulation of microtubule polymerization"/>
    <property type="evidence" value="ECO:0000314"/>
    <property type="project" value="UniProtKB"/>
</dbReference>
<dbReference type="GO" id="GO:0008104">
    <property type="term" value="P:protein localization"/>
    <property type="evidence" value="ECO:0000304"/>
    <property type="project" value="ARUK-UCL"/>
</dbReference>
<dbReference type="GO" id="GO:1902888">
    <property type="term" value="P:protein localization to astral microtubule"/>
    <property type="evidence" value="ECO:0000314"/>
    <property type="project" value="UniProtKB"/>
</dbReference>
<dbReference type="GO" id="GO:0071539">
    <property type="term" value="P:protein localization to centrosome"/>
    <property type="evidence" value="ECO:0007669"/>
    <property type="project" value="Ensembl"/>
</dbReference>
<dbReference type="GO" id="GO:0035372">
    <property type="term" value="P:protein localization to microtubule"/>
    <property type="evidence" value="ECO:0000314"/>
    <property type="project" value="UniProtKB"/>
</dbReference>
<dbReference type="GO" id="GO:1902480">
    <property type="term" value="P:protein localization to mitotic spindle"/>
    <property type="evidence" value="ECO:0000315"/>
    <property type="project" value="UniProtKB"/>
</dbReference>
<dbReference type="GO" id="GO:0031110">
    <property type="term" value="P:regulation of microtubule polymerization or depolymerization"/>
    <property type="evidence" value="ECO:0000318"/>
    <property type="project" value="GO_Central"/>
</dbReference>
<dbReference type="GO" id="GO:0051225">
    <property type="term" value="P:spindle assembly"/>
    <property type="evidence" value="ECO:0000318"/>
    <property type="project" value="GO_Central"/>
</dbReference>
<dbReference type="CDD" id="cd00014">
    <property type="entry name" value="CH_SF"/>
    <property type="match status" value="1"/>
</dbReference>
<dbReference type="DisProt" id="DP01271"/>
<dbReference type="FunFam" id="1.20.5.1430:FF:000001">
    <property type="entry name" value="microtubule-associated protein RP/EB family member 1"/>
    <property type="match status" value="1"/>
</dbReference>
<dbReference type="FunFam" id="1.10.418.10:FF:000007">
    <property type="entry name" value="Microtubule-associated protein, RP/EB family, member 2"/>
    <property type="match status" value="1"/>
</dbReference>
<dbReference type="Gene3D" id="1.20.5.1430">
    <property type="match status" value="1"/>
</dbReference>
<dbReference type="Gene3D" id="1.10.418.10">
    <property type="entry name" value="Calponin-like domain"/>
    <property type="match status" value="1"/>
</dbReference>
<dbReference type="InterPro" id="IPR001715">
    <property type="entry name" value="CH_dom"/>
</dbReference>
<dbReference type="InterPro" id="IPR036872">
    <property type="entry name" value="CH_dom_sf"/>
</dbReference>
<dbReference type="InterPro" id="IPR004953">
    <property type="entry name" value="EB1_C"/>
</dbReference>
<dbReference type="InterPro" id="IPR036133">
    <property type="entry name" value="EB1_C_sf"/>
</dbReference>
<dbReference type="InterPro" id="IPR027328">
    <property type="entry name" value="MAPRE"/>
</dbReference>
<dbReference type="PANTHER" id="PTHR10623">
    <property type="entry name" value="MICROTUBULE-ASSOCIATED PROTEIN RP/EB FAMILY MEMBER"/>
    <property type="match status" value="1"/>
</dbReference>
<dbReference type="Pfam" id="PF00307">
    <property type="entry name" value="CH"/>
    <property type="match status" value="1"/>
</dbReference>
<dbReference type="Pfam" id="PF03271">
    <property type="entry name" value="EB1"/>
    <property type="match status" value="1"/>
</dbReference>
<dbReference type="SUPFAM" id="SSF47576">
    <property type="entry name" value="Calponin-homology domain, CH-domain"/>
    <property type="match status" value="1"/>
</dbReference>
<dbReference type="SUPFAM" id="SSF140612">
    <property type="entry name" value="EB1 dimerisation domain-like"/>
    <property type="match status" value="1"/>
</dbReference>
<dbReference type="PROSITE" id="PS50021">
    <property type="entry name" value="CH"/>
    <property type="match status" value="1"/>
</dbReference>
<dbReference type="PROSITE" id="PS51230">
    <property type="entry name" value="EB1_C"/>
    <property type="match status" value="1"/>
</dbReference>
<comment type="function">
    <text evidence="1 9 15 22 24 26 33 34 35 37 38">Plus-end tracking protein (+TIP) that binds to the plus-end of microtubules and regulates the dynamics of the microtubule cytoskeleton (PubMed:12388762, PubMed:16109370, PubMed:19632184, PubMed:21646404, PubMed:23001180, PubMed:28726242, PubMed:28814570, PubMed:34608293). Recruits other +TIP proteins to microtubules by binding to a conserved Ser-X-Leu-Pro (SXLP) motif in their polypeptide chains (PubMed:19632184, PubMed:36592928). Promotes cytoplasmic microtubule nucleation and elongation (PubMed:12388762, PubMed:16109370, PubMed:19632184, PubMed:21646404, PubMed:28726242, PubMed:28814570). Involved in mitotic spindle positioning by stabilizing microtubules and promoting dynamic connection between astral microtubules and the cortex during mitotic chromosome segregation (PubMed:12388762, PubMed:34608293). Assists chromosome alignment in metaphase by recruiting the SKA complex to the spindle and stabilizing its interactions with microtubule bundles (K-fibers) (PubMed:27225956, PubMed:36592928). Also acts as a regulator of minus-end microtubule organization: interacts with the complex formed by AKAP9 and PDE4DIP, leading to recruit CAMSAP2 to the Golgi apparatus, thereby tethering non-centrosomal minus-end microtubules to the Golgi, an important step for polarized cell movement (PubMed:28814570). Promotes elongation of CAMSAP2-decorated microtubule stretches on the minus-end of microtubules (PubMed:28814570). Acts as a regulator of autophagosome transport via interaction with CAMSAP2 (PubMed:28726242). Functions downstream of Rho GTPases and DIAPH1 in stable microtubule formation (By similarity). May play a role in cell migration (By similarity).</text>
</comment>
<comment type="subunit">
    <text evidence="1 6 7 8 9 11 13 14 15 16 17 18 19 20 21 22 23 24 25 27 28 29 30 31 32 34 35 36 38 39">Homodimer (PubMed:15616574, PubMed:36592928). Heterodimer with MAPRE3 (PubMed:19255245). Interacts with DCTN1, DCTN2, TERF1 and dynein intermediate chain (PubMed:10226031, PubMed:11943150, PubMed:12388762, PubMed:14514668, PubMed:16109370, PubMed:16949363, PubMed:23874158). Interaction with DIAPH1 and DIAPH2 (By similarity). Interacts (via C-terminal residues 206-211) with APC (via C-terminal residues 2674-2843); the interaction inhibits association with and bundling of F-actin (PubMed:17293347). Interacts with CLASP2, DST, KIF2C and STIM1; probably required for their targeting to the growing microtubule plus ends (PubMed:12388762, PubMed:14514668, PubMed:15616574, PubMed:15631994, PubMed:19543227, PubMed:19632184, PubMed:7606712). Interacts with MTUS2; interaction is direct and probably targets MTUS2 to microtubules (PubMed:19543227). Interacts (via C-terminus) with SKA1 (via SXIP motif); the interaction is direct and stabilizes the kinetochore-microtubule attachment of the SKA1 complex (PubMed:27225956, PubMed:36592928). Interacts with APC2 (PubMed:10644998). Interacts with CLASP1 (PubMed:15631994). Interacts with CDK5RAP2 (PubMed:19553473). Interacts with MACF1 (By similarity). Interacts with RABL2/RABL2A; binds preferentially to GTP-bound RABL2 (By similarity). Interacts with KCNAB2 (By similarity). Interacts (via C-terminus) with CLIP1 (PubMed:17563362, PubMed:21646404). Interacts with SLAIN2 and SLAIN1 (PubMed:21646404). Interacts with KIF18B; this interaction is required for efficient accumulation of KIF18B at microtubule plus ends (PubMed:21820309). Interacts with MISP (PubMed:23509069). Interacts with KNSTRN (PubMed:23035123). Interacts with NCKAP5L (PubMed:26485573). Interacts with CAMSAP2 (PubMed:28726242). Interacts with PDE4DIP isoform 13/MMG8/SMYLE; this interaction is required for its recruitment to the Golgi apparatus (PubMed:25217626, PubMed:28814570). Forms a pericentrosomal complex with AKAP9, CDK5RAP2 and PDE4DIP isoform 13/MMG8/SMYLE; within this complex, MAPRE1 binding to CDK5RAP2 may be mediated by PDE4DIP (PubMed:29162697). Interacts with AKNA (By similarity). Interacts with GAS2L1, GAS2L2, and GAS2L3 (PubMed:24706950). Interacts with RARRES1 and AGBL2 (PubMed:21303978).</text>
</comment>
<comment type="interaction">
    <interactant intactId="EBI-1004115">
        <id>Q15691</id>
    </interactant>
    <interactant intactId="EBI-727707">
        <id>P25054</id>
        <label>APC</label>
    </interactant>
    <organismsDiffer>false</organismsDiffer>
    <experiments>6</experiments>
</comment>
<comment type="interaction">
    <interactant intactId="EBI-1004115">
        <id>Q15691</id>
    </interactant>
    <interactant intactId="EBI-1053045">
        <id>O95996</id>
        <label>APC2</label>
    </interactant>
    <organismsDiffer>false</organismsDiffer>
    <experiments>3</experiments>
</comment>
<comment type="interaction">
    <interactant intactId="EBI-1004115">
        <id>Q15691</id>
    </interactant>
    <interactant intactId="EBI-624291">
        <id>Q96GD4</id>
        <label>AURKB</label>
    </interactant>
    <organismsDiffer>false</organismsDiffer>
    <experiments>5</experiments>
</comment>
<comment type="interaction">
    <interactant intactId="EBI-1004115">
        <id>Q15691</id>
    </interactant>
    <interactant intactId="EBI-18396958">
        <id>A1L168</id>
        <label>C20orf202</label>
    </interactant>
    <organismsDiffer>false</organismsDiffer>
    <experiments>3</experiments>
</comment>
<comment type="interaction">
    <interactant intactId="EBI-1004115">
        <id>Q15691</id>
    </interactant>
    <interactant intactId="EBI-17793327">
        <id>Q9C0I3-2</id>
        <label>CCSER1</label>
    </interactant>
    <organismsDiffer>false</organismsDiffer>
    <experiments>3</experiments>
</comment>
<comment type="interaction">
    <interactant intactId="EBI-1004115">
        <id>Q15691</id>
    </interactant>
    <interactant intactId="EBI-913524">
        <id>O75122</id>
        <label>CLASP2</label>
    </interactant>
    <organismsDiffer>false</organismsDiffer>
    <experiments>5</experiments>
</comment>
<comment type="interaction">
    <interactant intactId="EBI-1004115">
        <id>Q15691</id>
    </interactant>
    <interactant intactId="EBI-2683569">
        <id>P30622</id>
        <label>CLIP1</label>
    </interactant>
    <organismsDiffer>false</organismsDiffer>
    <experiments>3</experiments>
</comment>
<comment type="interaction">
    <interactant intactId="EBI-1004115">
        <id>Q15691</id>
    </interactant>
    <interactant intactId="EBI-9640673">
        <id>P30622-1</id>
        <label>CLIP1</label>
    </interactant>
    <organismsDiffer>false</organismsDiffer>
    <experiments>2</experiments>
</comment>
<comment type="interaction">
    <interactant intactId="EBI-1004115">
        <id>Q15691</id>
    </interactant>
    <interactant intactId="EBI-6479976">
        <id>P30622-2</id>
        <label>CLIP1</label>
    </interactant>
    <organismsDiffer>false</organismsDiffer>
    <experiments>4</experiments>
</comment>
<comment type="interaction">
    <interactant intactId="EBI-1004115">
        <id>Q15691</id>
    </interactant>
    <interactant intactId="EBI-724352">
        <id>Q14203</id>
        <label>DCTN1</label>
    </interactant>
    <organismsDiffer>false</organismsDiffer>
    <experiments>8</experiments>
</comment>
<comment type="interaction">
    <interactant intactId="EBI-1004115">
        <id>Q15691</id>
    </interactant>
    <interactant intactId="EBI-355041">
        <id>P15924</id>
        <label>DSP</label>
    </interactant>
    <organismsDiffer>false</organismsDiffer>
    <experiments>7</experiments>
</comment>
<comment type="interaction">
    <interactant intactId="EBI-1004115">
        <id>Q15691</id>
    </interactant>
    <interactant intactId="EBI-310758">
        <id>Q03001</id>
        <label>DST</label>
    </interactant>
    <organismsDiffer>false</organismsDiffer>
    <experiments>7</experiments>
</comment>
<comment type="interaction">
    <interactant intactId="EBI-1004115">
        <id>Q15691</id>
    </interactant>
    <interactant intactId="EBI-7960826">
        <id>Q8NHY3</id>
        <label>GAS2L2</label>
    </interactant>
    <organismsDiffer>false</organismsDiffer>
    <experiments>6</experiments>
</comment>
<comment type="interaction">
    <interactant intactId="EBI-1004115">
        <id>Q15691</id>
    </interactant>
    <interactant intactId="EBI-1642317">
        <id>Q99661</id>
        <label>KIF2C</label>
    </interactant>
    <organismsDiffer>false</organismsDiffer>
    <experiments>8</experiments>
</comment>
<comment type="interaction">
    <interactant intactId="EBI-1004115">
        <id>Q15691</id>
    </interactant>
    <interactant intactId="EBI-740929">
        <id>Q53G59</id>
        <label>KLHL12</label>
    </interactant>
    <organismsDiffer>false</organismsDiffer>
    <experiments>3</experiments>
</comment>
<comment type="interaction">
    <interactant intactId="EBI-1004115">
        <id>Q15691</id>
    </interactant>
    <interactant intactId="EBI-373334">
        <id>Q9Y448</id>
        <label>KNSTRN</label>
    </interactant>
    <organismsDiffer>false</organismsDiffer>
    <experiments>5</experiments>
</comment>
<comment type="interaction">
    <interactant intactId="EBI-1004115">
        <id>Q15691</id>
    </interactant>
    <interactant intactId="EBI-739696">
        <id>P25791</id>
        <label>LMO2</label>
    </interactant>
    <organismsDiffer>false</organismsDiffer>
    <experiments>6</experiments>
</comment>
<comment type="interaction">
    <interactant intactId="EBI-1004115">
        <id>Q15691</id>
    </interactant>
    <interactant intactId="EBI-11959475">
        <id>P25791-3</id>
        <label>LMO2</label>
    </interactant>
    <organismsDiffer>false</organismsDiffer>
    <experiments>6</experiments>
</comment>
<comment type="interaction">
    <interactant intactId="EBI-1004115">
        <id>Q15691</id>
    </interactant>
    <interactant intactId="EBI-1004115">
        <id>Q15691</id>
        <label>MAPRE1</label>
    </interactant>
    <organismsDiffer>false</organismsDiffer>
    <experiments>8</experiments>
</comment>
<comment type="interaction">
    <interactant intactId="EBI-1004115">
        <id>Q15691</id>
    </interactant>
    <interactant intactId="EBI-739717">
        <id>Q15555</id>
        <label>MAPRE2</label>
    </interactant>
    <organismsDiffer>false</organismsDiffer>
    <experiments>11</experiments>
</comment>
<comment type="interaction">
    <interactant intactId="EBI-1004115">
        <id>Q15691</id>
    </interactant>
    <interactant intactId="EBI-726739">
        <id>Q9UPY8</id>
        <label>MAPRE3</label>
    </interactant>
    <organismsDiffer>false</organismsDiffer>
    <experiments>22</experiments>
</comment>
<comment type="interaction">
    <interactant intactId="EBI-1004115">
        <id>Q15691</id>
    </interactant>
    <interactant intactId="EBI-949983">
        <id>Q9H992</id>
        <label>MARCHF7</label>
    </interactant>
    <organismsDiffer>false</organismsDiffer>
    <experiments>4</experiments>
</comment>
<comment type="interaction">
    <interactant intactId="EBI-1004115">
        <id>Q15691</id>
    </interactant>
    <interactant intactId="EBI-16439278">
        <id>Q6FHY5</id>
        <label>MEOX2</label>
    </interactant>
    <organismsDiffer>false</organismsDiffer>
    <experiments>3</experiments>
</comment>
<comment type="interaction">
    <interactant intactId="EBI-1004115">
        <id>Q15691</id>
    </interactant>
    <interactant intactId="EBI-742948">
        <id>Q5JR59</id>
        <label>MTUS2</label>
    </interactant>
    <organismsDiffer>false</organismsDiffer>
    <experiments>7</experiments>
</comment>
<comment type="interaction">
    <interactant intactId="EBI-1004115">
        <id>Q15691</id>
    </interactant>
    <interactant intactId="EBI-747278">
        <id>P26367</id>
        <label>PAX6</label>
    </interactant>
    <organismsDiffer>false</organismsDiffer>
    <experiments>3</experiments>
</comment>
<comment type="interaction">
    <interactant intactId="EBI-1004115">
        <id>Q15691</id>
    </interactant>
    <interactant intactId="EBI-1105124">
        <id>Q5VU43</id>
        <label>PDE4DIP</label>
    </interactant>
    <organismsDiffer>false</organismsDiffer>
    <experiments>6</experiments>
</comment>
<comment type="interaction">
    <interactant intactId="EBI-1004115">
        <id>Q15691</id>
    </interactant>
    <interactant intactId="EBI-713847">
        <id>P56282</id>
        <label>POLE2</label>
    </interactant>
    <organismsDiffer>false</organismsDiffer>
    <experiments>6</experiments>
</comment>
<comment type="interaction">
    <interactant intactId="EBI-1004115">
        <id>Q15691</id>
    </interactant>
    <interactant intactId="EBI-713867">
        <id>O60828</id>
        <label>PQBP1</label>
    </interactant>
    <organismsDiffer>false</organismsDiffer>
    <experiments>6</experiments>
</comment>
<comment type="interaction">
    <interactant intactId="EBI-1004115">
        <id>Q15691</id>
    </interactant>
    <interactant intactId="EBI-359352">
        <id>P25786</id>
        <label>PSMA1</label>
    </interactant>
    <organismsDiffer>false</organismsDiffer>
    <experiments>6</experiments>
</comment>
<comment type="interaction">
    <interactant intactId="EBI-1004115">
        <id>Q15691</id>
    </interactant>
    <interactant intactId="EBI-10241662">
        <id>Q495Y8</id>
        <label>SPDYE2</label>
    </interactant>
    <organismsDiffer>false</organismsDiffer>
    <experiments>3</experiments>
</comment>
<comment type="interaction">
    <interactant intactId="EBI-1004115">
        <id>Q15691</id>
    </interactant>
    <interactant intactId="EBI-11960469">
        <id>P0CI01</id>
        <label>SPDYE6</label>
    </interactant>
    <organismsDiffer>false</organismsDiffer>
    <experiments>3</experiments>
</comment>
<comment type="interaction">
    <interactant intactId="EBI-1004115">
        <id>Q15691</id>
    </interactant>
    <interactant intactId="EBI-448878">
        <id>Q13586</id>
        <label>STIM1</label>
    </interactant>
    <organismsDiffer>false</organismsDiffer>
    <experiments>2</experiments>
</comment>
<comment type="interaction">
    <interactant intactId="EBI-1004115">
        <id>Q15691</id>
    </interactant>
    <interactant intactId="EBI-710997">
        <id>P54274</id>
        <label>TERF1</label>
    </interactant>
    <organismsDiffer>false</organismsDiffer>
    <experiments>2</experiments>
</comment>
<comment type="interaction">
    <interactant intactId="EBI-1004115">
        <id>Q15691</id>
    </interactant>
    <interactant intactId="EBI-2349743">
        <id>Q12815</id>
        <label>TROAP</label>
    </interactant>
    <organismsDiffer>false</organismsDiffer>
    <experiments>10</experiments>
</comment>
<comment type="interaction">
    <interactant intactId="EBI-1004115">
        <id>Q15691</id>
    </interactant>
    <interactant intactId="EBI-12217757">
        <id>Q96CK0</id>
        <label>ZNF653</label>
    </interactant>
    <organismsDiffer>false</organismsDiffer>
    <experiments>3</experiments>
</comment>
<comment type="subcellular location">
    <subcellularLocation>
        <location evidence="5 9 24 26 35 40">Cytoplasm</location>
        <location evidence="5 9 24 26 35 40">Cytoskeleton</location>
    </subcellularLocation>
    <subcellularLocation>
        <location evidence="9 12">Cytoplasm</location>
        <location evidence="9 12">Cytoskeleton</location>
        <location evidence="9 12">Microtubule organizing center</location>
        <location evidence="9 12">Centrosome</location>
    </subcellularLocation>
    <subcellularLocation>
        <location evidence="31">Golgi apparatus</location>
    </subcellularLocation>
    <subcellularLocation>
        <location evidence="28 33">Cytoplasm</location>
        <location evidence="28 33">Cytoskeleton</location>
        <location evidence="28 33">Spindle</location>
    </subcellularLocation>
    <subcellularLocation>
        <location evidence="37">Cytoplasm</location>
        <location evidence="37">Cytoskeleton</location>
        <location evidence="37">Spindle pole</location>
    </subcellularLocation>
    <text evidence="31 33 35">Associated with the microtubule growing distal tips (PubMed:28814570). In addition to localizing to microtubule plus-ends, also exhibits some localization along the length of the microtubules (PubMed:27225956). Recruitment to the Golgi apparatus requires the presence of PDE4DIP isoform 13/MMG8/SMYLE (PubMed:25217626).</text>
</comment>
<comment type="tissue specificity">
    <text evidence="7">Ubiquitously expressed.</text>
</comment>
<comment type="domain">
    <text evidence="9">Composed of two functionally independent domains. The N-terminal domain forms a hydrophobic cleft involved in microtubule binding and the C-terminal is involved in the formation of mutually exclusive complexes with APC and DCTN1.</text>
</comment>
<comment type="PTM">
    <text evidence="26">Acetylation at Lys-220 by KAT2B/PCAF promotes dynamic kinetochore-microtubule interactions in early mitosis.</text>
</comment>
<comment type="PTM">
    <text evidence="37">Crotonylated by KAT5 during mitosis, promoting astral microtubule plasticity and dynamic connection between astral microtubules and the cortex during mitotic chromosome segregation, thereby ensuring accurate spindle positioning in mitosis (PubMed:34608293). Decrotonylated by HDAC3 (PubMed:34608293).</text>
</comment>
<comment type="similarity">
    <text evidence="43">Belongs to the MAPRE family.</text>
</comment>
<comment type="online information" name="Atlas of Genetics and Cytogenetics in Oncology and Haematology">
    <link uri="https://atlasgeneticsoncology.org/gene/455/MAPRE1"/>
</comment>
<gene>
    <name evidence="45" type="primary">MAPRE1</name>
</gene>
<feature type="initiator methionine" description="Removed" evidence="41 47 48 49">
    <location>
        <position position="1"/>
    </location>
</feature>
<feature type="chain" id="PRO_0000213416" description="Microtubule-associated protein RP/EB family member 1">
    <location>
        <begin position="2"/>
        <end position="268"/>
    </location>
</feature>
<feature type="domain" description="Calponin-homology (CH)" evidence="2">
    <location>
        <begin position="14"/>
        <end position="116"/>
    </location>
</feature>
<feature type="domain" description="EB1 C-terminal" evidence="3">
    <location>
        <begin position="185"/>
        <end position="255"/>
    </location>
</feature>
<feature type="region of interest" description="Interaction with MTUS2/TIP150" evidence="20">
    <location>
        <begin position="124"/>
        <end position="268"/>
    </location>
</feature>
<feature type="region of interest" description="Disordered" evidence="4">
    <location>
        <begin position="146"/>
        <end position="187"/>
    </location>
</feature>
<feature type="region of interest" description="Interaction with CDK5RAP2" evidence="21">
    <location>
        <begin position="185"/>
        <end position="268"/>
    </location>
</feature>
<feature type="region of interest" description="Interaction with APC" evidence="17">
    <location>
        <begin position="206"/>
        <end position="211"/>
    </location>
</feature>
<feature type="region of interest" description="DCTN1-binding" evidence="11">
    <location>
        <begin position="208"/>
        <end position="268"/>
    </location>
</feature>
<feature type="region of interest" description="APC-binding" evidence="11">
    <location>
        <begin position="220"/>
        <end position="242"/>
    </location>
</feature>
<feature type="region of interest" description="Interaction with SKA1" evidence="38 44">
    <location>
        <begin position="232"/>
        <end position="255"/>
    </location>
</feature>
<feature type="compositionally biased region" description="Polar residues" evidence="4">
    <location>
        <begin position="153"/>
        <end position="169"/>
    </location>
</feature>
<feature type="modified residue" description="N-acetylalanine" evidence="41 47 48 49">
    <location>
        <position position="2"/>
    </location>
</feature>
<feature type="modified residue" description="N6-crotonyllysine" evidence="37">
    <location>
        <position position="66"/>
    </location>
</feature>
<feature type="modified residue" description="Phosphotyrosine" evidence="46">
    <location>
        <position position="124"/>
    </location>
</feature>
<feature type="modified residue" description="Phosphoserine" evidence="50">
    <location>
        <position position="155"/>
    </location>
</feature>
<feature type="modified residue" description="Phosphoserine" evidence="50">
    <location>
        <position position="165"/>
    </location>
</feature>
<feature type="modified residue" description="N6-acetyllysine" evidence="26">
    <location>
        <position position="220"/>
    </location>
</feature>
<feature type="mutagenesis site" description="No effect." evidence="10">
    <original>KK</original>
    <variation>EE</variation>
    <location>
        <begin position="59"/>
        <end position="60"/>
    </location>
</feature>
<feature type="mutagenesis site" description="Abolished crotonylation by KAT5." evidence="37">
    <original>K</original>
    <variation>R</variation>
    <location>
        <position position="66"/>
    </location>
</feature>
<feature type="mutagenesis site" description="Loss of binding to microtubules." evidence="10 44">
    <original>K</original>
    <variation>E</variation>
    <location>
        <position position="89"/>
    </location>
</feature>
<feature type="mutagenesis site" description="Abolished acetylation by KAT2B/PCAF, impairing kinetochore-microtubule interactions during mitosis." evidence="26">
    <original>K</original>
    <variation>R</variation>
    <location>
        <position position="220"/>
    </location>
</feature>
<feature type="helix" evidence="52">
    <location>
        <begin position="17"/>
        <end position="28"/>
    </location>
</feature>
<feature type="helix" evidence="52">
    <location>
        <begin position="35"/>
        <end position="40"/>
    </location>
</feature>
<feature type="helix" evidence="52">
    <location>
        <begin position="42"/>
        <end position="51"/>
    </location>
</feature>
<feature type="helix" evidence="52">
    <location>
        <begin position="58"/>
        <end position="60"/>
    </location>
</feature>
<feature type="helix" evidence="52">
    <location>
        <begin position="68"/>
        <end position="85"/>
    </location>
</feature>
<feature type="helix" evidence="52">
    <location>
        <begin position="93"/>
        <end position="96"/>
    </location>
</feature>
<feature type="turn" evidence="53">
    <location>
        <begin position="97"/>
        <end position="99"/>
    </location>
</feature>
<feature type="helix" evidence="52">
    <location>
        <begin position="101"/>
        <end position="118"/>
    </location>
</feature>
<feature type="helix" evidence="52">
    <location>
        <begin position="126"/>
        <end position="129"/>
    </location>
</feature>
<feature type="helix" evidence="51">
    <location>
        <begin position="192"/>
        <end position="230"/>
    </location>
</feature>
<feature type="turn" evidence="51">
    <location>
        <begin position="231"/>
        <end position="233"/>
    </location>
</feature>
<feature type="helix" evidence="51">
    <location>
        <begin position="237"/>
        <end position="247"/>
    </location>
</feature>
<feature type="helix" evidence="51">
    <location>
        <begin position="251"/>
        <end position="253"/>
    </location>
</feature>
<organism>
    <name type="scientific">Homo sapiens</name>
    <name type="common">Human</name>
    <dbReference type="NCBI Taxonomy" id="9606"/>
    <lineage>
        <taxon>Eukaryota</taxon>
        <taxon>Metazoa</taxon>
        <taxon>Chordata</taxon>
        <taxon>Craniata</taxon>
        <taxon>Vertebrata</taxon>
        <taxon>Euteleostomi</taxon>
        <taxon>Mammalia</taxon>
        <taxon>Eutheria</taxon>
        <taxon>Euarchontoglires</taxon>
        <taxon>Primates</taxon>
        <taxon>Haplorrhini</taxon>
        <taxon>Catarrhini</taxon>
        <taxon>Hominidae</taxon>
        <taxon>Homo</taxon>
    </lineage>
</organism>
<proteinExistence type="evidence at protein level"/>